<evidence type="ECO:0000250" key="1">
    <source>
        <dbReference type="UniProtKB" id="P97526"/>
    </source>
</evidence>
<evidence type="ECO:0000250" key="2">
    <source>
        <dbReference type="UniProtKB" id="Q04690"/>
    </source>
</evidence>
<evidence type="ECO:0000255" key="3">
    <source>
        <dbReference type="PROSITE-ProRule" id="PRU00056"/>
    </source>
</evidence>
<evidence type="ECO:0000255" key="4">
    <source>
        <dbReference type="PROSITE-ProRule" id="PRU00167"/>
    </source>
</evidence>
<evidence type="ECO:0000256" key="5">
    <source>
        <dbReference type="SAM" id="MobiDB-lite"/>
    </source>
</evidence>
<evidence type="ECO:0000269" key="6">
    <source>
    </source>
</evidence>
<evidence type="ECO:0000269" key="7">
    <source>
    </source>
</evidence>
<evidence type="ECO:0000269" key="8">
    <source>
    </source>
</evidence>
<evidence type="ECO:0000269" key="9">
    <source>
    </source>
</evidence>
<evidence type="ECO:0000269" key="10">
    <source>
    </source>
</evidence>
<evidence type="ECO:0000269" key="11">
    <source>
    </source>
</evidence>
<evidence type="ECO:0000269" key="12">
    <source>
    </source>
</evidence>
<evidence type="ECO:0000269" key="13">
    <source>
    </source>
</evidence>
<evidence type="ECO:0000269" key="14">
    <source>
    </source>
</evidence>
<evidence type="ECO:0000269" key="15">
    <source>
    </source>
</evidence>
<evidence type="ECO:0000269" key="16">
    <source>
    </source>
</evidence>
<evidence type="ECO:0000269" key="17">
    <source>
    </source>
</evidence>
<evidence type="ECO:0000269" key="18">
    <source>
    </source>
</evidence>
<evidence type="ECO:0000269" key="19">
    <source>
    </source>
</evidence>
<evidence type="ECO:0000269" key="20">
    <source>
    </source>
</evidence>
<evidence type="ECO:0000269" key="21">
    <source>
    </source>
</evidence>
<evidence type="ECO:0000269" key="22">
    <source>
    </source>
</evidence>
<evidence type="ECO:0000269" key="23">
    <source>
    </source>
</evidence>
<evidence type="ECO:0000269" key="24">
    <source>
    </source>
</evidence>
<evidence type="ECO:0000269" key="25">
    <source>
    </source>
</evidence>
<evidence type="ECO:0000269" key="26">
    <source>
    </source>
</evidence>
<evidence type="ECO:0000269" key="27">
    <source>
    </source>
</evidence>
<evidence type="ECO:0000269" key="28">
    <source>
    </source>
</evidence>
<evidence type="ECO:0000269" key="29">
    <source>
    </source>
</evidence>
<evidence type="ECO:0000269" key="30">
    <source>
    </source>
</evidence>
<evidence type="ECO:0000269" key="31">
    <source>
    </source>
</evidence>
<evidence type="ECO:0000269" key="32">
    <source>
    </source>
</evidence>
<evidence type="ECO:0000269" key="33">
    <source>
    </source>
</evidence>
<evidence type="ECO:0000269" key="34">
    <source>
    </source>
</evidence>
<evidence type="ECO:0000269" key="35">
    <source>
    </source>
</evidence>
<evidence type="ECO:0000269" key="36">
    <source>
    </source>
</evidence>
<evidence type="ECO:0000269" key="37">
    <source>
    </source>
</evidence>
<evidence type="ECO:0000269" key="38">
    <source>
    </source>
</evidence>
<evidence type="ECO:0000269" key="39">
    <source>
    </source>
</evidence>
<evidence type="ECO:0000269" key="40">
    <source>
    </source>
</evidence>
<evidence type="ECO:0000269" key="41">
    <source>
    </source>
</evidence>
<evidence type="ECO:0000269" key="42">
    <source>
    </source>
</evidence>
<evidence type="ECO:0000269" key="43">
    <source>
    </source>
</evidence>
<evidence type="ECO:0000269" key="44">
    <source>
    </source>
</evidence>
<evidence type="ECO:0000269" key="45">
    <source>
    </source>
</evidence>
<evidence type="ECO:0000269" key="46">
    <source>
    </source>
</evidence>
<evidence type="ECO:0000269" key="47">
    <source>
    </source>
</evidence>
<evidence type="ECO:0000269" key="48">
    <source>
    </source>
</evidence>
<evidence type="ECO:0000269" key="49">
    <source>
    </source>
</evidence>
<evidence type="ECO:0000269" key="50">
    <source>
    </source>
</evidence>
<evidence type="ECO:0000269" key="51">
    <source>
    </source>
</evidence>
<evidence type="ECO:0000269" key="52">
    <source>
    </source>
</evidence>
<evidence type="ECO:0000269" key="53">
    <source>
    </source>
</evidence>
<evidence type="ECO:0000269" key="54">
    <source>
    </source>
</evidence>
<evidence type="ECO:0000269" key="55">
    <source>
    </source>
</evidence>
<evidence type="ECO:0000269" key="56">
    <source>
    </source>
</evidence>
<evidence type="ECO:0000269" key="57">
    <source ref="7"/>
</evidence>
<evidence type="ECO:0000303" key="58">
    <source>
    </source>
</evidence>
<evidence type="ECO:0000303" key="59">
    <source>
    </source>
</evidence>
<evidence type="ECO:0000303" key="60">
    <source>
    </source>
</evidence>
<evidence type="ECO:0000303" key="61">
    <source>
    </source>
</evidence>
<evidence type="ECO:0000303" key="62">
    <source>
    </source>
</evidence>
<evidence type="ECO:0000303" key="63">
    <source>
    </source>
</evidence>
<evidence type="ECO:0000303" key="64">
    <source>
    </source>
</evidence>
<evidence type="ECO:0000303" key="65">
    <source>
    </source>
</evidence>
<evidence type="ECO:0000303" key="66">
    <source>
    </source>
</evidence>
<evidence type="ECO:0000305" key="67"/>
<evidence type="ECO:0000305" key="68">
    <source>
    </source>
</evidence>
<evidence type="ECO:0007744" key="69">
    <source>
    </source>
</evidence>
<evidence type="ECO:0007744" key="70">
    <source>
    </source>
</evidence>
<evidence type="ECO:0007744" key="71">
    <source>
    </source>
</evidence>
<evidence type="ECO:0007744" key="72">
    <source>
    </source>
</evidence>
<evidence type="ECO:0007744" key="73">
    <source>
    </source>
</evidence>
<evidence type="ECO:0007744" key="74">
    <source>
    </source>
</evidence>
<evidence type="ECO:0007829" key="75">
    <source>
        <dbReference type="PDB" id="1NF1"/>
    </source>
</evidence>
<evidence type="ECO:0007829" key="76">
    <source>
        <dbReference type="PDB" id="2D4Q"/>
    </source>
</evidence>
<evidence type="ECO:0007829" key="77">
    <source>
        <dbReference type="PDB" id="3P7Z"/>
    </source>
</evidence>
<evidence type="ECO:0007829" key="78">
    <source>
        <dbReference type="PDB" id="3PG7"/>
    </source>
</evidence>
<evidence type="ECO:0007829" key="79">
    <source>
        <dbReference type="PDB" id="6OB3"/>
    </source>
</evidence>
<evidence type="ECO:0007829" key="80">
    <source>
        <dbReference type="PDB" id="6V65"/>
    </source>
</evidence>
<evidence type="ECO:0007829" key="81">
    <source>
        <dbReference type="PDB" id="6V6F"/>
    </source>
</evidence>
<evidence type="ECO:0007829" key="82">
    <source>
        <dbReference type="PDB" id="7PGP"/>
    </source>
</evidence>
<evidence type="ECO:0007829" key="83">
    <source>
        <dbReference type="PDB" id="7PGS"/>
    </source>
</evidence>
<evidence type="ECO:0007829" key="84">
    <source>
        <dbReference type="PDB" id="7PGU"/>
    </source>
</evidence>
<protein>
    <recommendedName>
        <fullName>Neurofibromin</fullName>
    </recommendedName>
    <alternativeName>
        <fullName>Neurofibromatosis-related protein NF-1</fullName>
    </alternativeName>
    <component>
        <recommendedName>
            <fullName>Neurofibromin truncated</fullName>
        </recommendedName>
    </component>
</protein>
<gene>
    <name type="primary">NF1</name>
</gene>
<reference key="1">
    <citation type="journal article" date="1992" name="DNA Cell Biol.">
        <title>Complete human NF1 cDNA sequence: two alternatively spliced mRNAs and absence of expression in a neuroblastoma line.</title>
        <authorList>
            <person name="Bernards A."/>
            <person name="Haase V.H."/>
            <person name="Murthy A.E."/>
            <person name="Menon A."/>
            <person name="Hannigan G.E."/>
            <person name="Gusella J.F."/>
        </authorList>
    </citation>
    <scope>NUCLEOTIDE SEQUENCE [MRNA] (ISOFORMS I AND II)</scope>
</reference>
<reference key="2">
    <citation type="journal article" date="1990" name="Science">
        <title>Type 1 neurofibromatosis gene: identification of a large transcript disrupted in three NF1 patients.</title>
        <authorList>
            <person name="Wallace M.R."/>
            <person name="Marchuk D.A."/>
            <person name="Andersen L.B."/>
            <person name="Letcher R."/>
            <person name="Odeh H.M."/>
            <person name="Saulino A.M."/>
            <person name="Fountain J.W."/>
            <person name="Brereton A."/>
            <person name="Nicholson J."/>
            <person name="Mitchell A.L."/>
            <person name="Brownstein B.H."/>
            <person name="Collins F.S."/>
        </authorList>
    </citation>
    <scope>NUCLEOTIDE SEQUENCE [MRNA] (ISOFORM I)</scope>
</reference>
<reference key="3">
    <citation type="journal article" date="1990" name="Science">
        <authorList>
            <person name="Wallace M.R."/>
            <person name="Marchuk D.A."/>
            <person name="Andersen L.B."/>
            <person name="Letcher R."/>
            <person name="Odeh H.M."/>
            <person name="Saulino A.M."/>
            <person name="Fountain J.W."/>
            <person name="Brereton A."/>
            <person name="Nicholson J."/>
            <person name="Mitchell A.L."/>
            <person name="Brownstein B.H."/>
            <person name="Collins F.S."/>
        </authorList>
    </citation>
    <scope>ERRATUM OF PUBMED:2134734</scope>
</reference>
<reference key="4">
    <citation type="journal article" date="1991" name="Genomics">
        <title>cDNA cloning of the type 1 neurofibromatosis gene: complete sequence of the NF1 gene product.</title>
        <authorList>
            <person name="Marchuk D.A."/>
            <person name="Saulino A.M."/>
            <person name="Tavakkol R."/>
            <person name="Swaroop M."/>
            <person name="Wallace M.R."/>
            <person name="Andersen L.B."/>
            <person name="Mitchell A.L."/>
            <person name="Gutmann D.H."/>
            <person name="Boguski M.S."/>
            <person name="Collins F.S."/>
        </authorList>
    </citation>
    <scope>NUCLEOTIDE SEQUENCE [MRNA] (ISOFORM I)</scope>
</reference>
<reference key="5">
    <citation type="journal article" date="1992" name="Biochem. Biophys. Res. Commun.">
        <title>Molecular cloning of a cDNA coding for neurofibromatosis type 1 protein isoform lacking the domain related to ras GTPase-activating protein.</title>
        <authorList>
            <person name="Suzuki H."/>
            <person name="Takahashi K."/>
            <person name="Kubota Y."/>
            <person name="Shibahara S."/>
        </authorList>
    </citation>
    <scope>NUCLEOTIDE SEQUENCE [MRNA] (ISOFORM 3)</scope>
    <scope>ALTERNATIVE SPLICING</scope>
    <source>
        <tissue>Placenta</tissue>
    </source>
</reference>
<reference key="6">
    <citation type="journal article" date="1995" name="Tohoku J. Exp. Med.">
        <title>Evidence for the presence of two amino-terminal isoforms of neurofibromin, a gene product responsible for neurofibromatosis type 1.</title>
        <authorList>
            <person name="Suzuki H."/>
            <person name="Takahashi K."/>
            <person name="Shibahara S."/>
        </authorList>
    </citation>
    <scope>NUCLEOTIDE SEQUENCE [MRNA] (ISOFORM 5)</scope>
    <source>
        <tissue>Kidney</tissue>
    </source>
</reference>
<reference key="7">
    <citation type="submission" date="2004-11" db="EMBL/GenBank/DDBJ databases">
        <authorList>
            <consortium name="NIEHS SNPs program"/>
        </authorList>
    </citation>
    <scope>NUCLEOTIDE SEQUENCE [GENOMIC DNA]</scope>
    <scope>VARIANTS CYS-80; LEU-678; HIS-1422 AND LEU-2511</scope>
</reference>
<reference key="8">
    <citation type="journal article" date="2006" name="Nature">
        <title>DNA sequence of human chromosome 17 and analysis of rearrangement in the human lineage.</title>
        <authorList>
            <person name="Zody M.C."/>
            <person name="Garber M."/>
            <person name="Adams D.J."/>
            <person name="Sharpe T."/>
            <person name="Harrow J."/>
            <person name="Lupski J.R."/>
            <person name="Nicholson C."/>
            <person name="Searle S.M."/>
            <person name="Wilming L."/>
            <person name="Young S.K."/>
            <person name="Abouelleil A."/>
            <person name="Allen N.R."/>
            <person name="Bi W."/>
            <person name="Bloom T."/>
            <person name="Borowsky M.L."/>
            <person name="Bugalter B.E."/>
            <person name="Butler J."/>
            <person name="Chang J.L."/>
            <person name="Chen C.-K."/>
            <person name="Cook A."/>
            <person name="Corum B."/>
            <person name="Cuomo C.A."/>
            <person name="de Jong P.J."/>
            <person name="DeCaprio D."/>
            <person name="Dewar K."/>
            <person name="FitzGerald M."/>
            <person name="Gilbert J."/>
            <person name="Gibson R."/>
            <person name="Gnerre S."/>
            <person name="Goldstein S."/>
            <person name="Grafham D.V."/>
            <person name="Grocock R."/>
            <person name="Hafez N."/>
            <person name="Hagopian D.S."/>
            <person name="Hart E."/>
            <person name="Norman C.H."/>
            <person name="Humphray S."/>
            <person name="Jaffe D.B."/>
            <person name="Jones M."/>
            <person name="Kamal M."/>
            <person name="Khodiyar V.K."/>
            <person name="LaButti K."/>
            <person name="Laird G."/>
            <person name="Lehoczky J."/>
            <person name="Liu X."/>
            <person name="Lokyitsang T."/>
            <person name="Loveland J."/>
            <person name="Lui A."/>
            <person name="Macdonald P."/>
            <person name="Major J.E."/>
            <person name="Matthews L."/>
            <person name="Mauceli E."/>
            <person name="McCarroll S.A."/>
            <person name="Mihalev A.H."/>
            <person name="Mudge J."/>
            <person name="Nguyen C."/>
            <person name="Nicol R."/>
            <person name="O'Leary S.B."/>
            <person name="Osoegawa K."/>
            <person name="Schwartz D.C."/>
            <person name="Shaw-Smith C."/>
            <person name="Stankiewicz P."/>
            <person name="Steward C."/>
            <person name="Swarbreck D."/>
            <person name="Venkataraman V."/>
            <person name="Whittaker C.A."/>
            <person name="Yang X."/>
            <person name="Zimmer A.R."/>
            <person name="Bradley A."/>
            <person name="Hubbard T."/>
            <person name="Birren B.W."/>
            <person name="Rogers J."/>
            <person name="Lander E.S."/>
            <person name="Nusbaum C."/>
        </authorList>
    </citation>
    <scope>NUCLEOTIDE SEQUENCE [LARGE SCALE GENOMIC DNA]</scope>
</reference>
<reference key="9">
    <citation type="submission" date="2005-09" db="EMBL/GenBank/DDBJ databases">
        <authorList>
            <person name="Mural R.J."/>
            <person name="Istrail S."/>
            <person name="Sutton G."/>
            <person name="Florea L."/>
            <person name="Halpern A.L."/>
            <person name="Mobarry C.M."/>
            <person name="Lippert R."/>
            <person name="Walenz B."/>
            <person name="Shatkay H."/>
            <person name="Dew I."/>
            <person name="Miller J.R."/>
            <person name="Flanigan M.J."/>
            <person name="Edwards N.J."/>
            <person name="Bolanos R."/>
            <person name="Fasulo D."/>
            <person name="Halldorsson B.V."/>
            <person name="Hannenhalli S."/>
            <person name="Turner R."/>
            <person name="Yooseph S."/>
            <person name="Lu F."/>
            <person name="Nusskern D.R."/>
            <person name="Shue B.C."/>
            <person name="Zheng X.H."/>
            <person name="Zhong F."/>
            <person name="Delcher A.L."/>
            <person name="Huson D.H."/>
            <person name="Kravitz S.A."/>
            <person name="Mouchard L."/>
            <person name="Reinert K."/>
            <person name="Remington K.A."/>
            <person name="Clark A.G."/>
            <person name="Waterman M.S."/>
            <person name="Eichler E.E."/>
            <person name="Adams M.D."/>
            <person name="Hunkapiller M.W."/>
            <person name="Myers E.W."/>
            <person name="Venter J.C."/>
        </authorList>
    </citation>
    <scope>NUCLEOTIDE SEQUENCE [LARGE SCALE GENOMIC DNA]</scope>
</reference>
<reference key="10">
    <citation type="journal article" date="1990" name="Cell">
        <title>A major segment of the neurofibromatosis type 1 gene: cDNA sequence, genomic structure, and point mutations.</title>
        <authorList>
            <person name="Cawthon R.M."/>
            <person name="Weiss R."/>
            <person name="Xu G."/>
            <person name="Viskochil D."/>
            <person name="Culver M."/>
            <person name="Stevens J."/>
            <person name="Robertson M."/>
            <person name="Dunn D."/>
            <person name="Gesteland R."/>
            <person name="O'Connell P."/>
            <person name="White R."/>
        </authorList>
    </citation>
    <scope>NUCLEOTIDE SEQUENCE [GENOMIC DNA / MRNA] OF 335-2839 (ISOFORM I)</scope>
    <scope>VARIANT NF1 PRO-1953</scope>
</reference>
<reference key="11">
    <citation type="journal article" date="1990" name="Cell">
        <title>The neurofibromatosis type 1 gene encodes a protein related to GAP.</title>
        <authorList>
            <person name="Xu G."/>
            <person name="O'Connell P."/>
            <person name="Viskochil D."/>
            <person name="Cawthon R.M."/>
            <person name="Robertson M."/>
            <person name="Culver M."/>
            <person name="Dunn D."/>
            <person name="Stevens J."/>
            <person name="Gesteland R."/>
            <person name="White R."/>
            <person name="Weiss R."/>
        </authorList>
    </citation>
    <scope>NUCLEOTIDE SEQUENCE [MRNA] OF 335-2839 (ISOFORMS I AND 6)</scope>
</reference>
<reference key="12">
    <citation type="journal article" date="1997" name="Hum. Mol. Genet.">
        <title>Emergence and scattering of multiple neurofibromatosis (NF1)-related sequences during hominoid evolution suggest a process of pericentromeric interchromosomal transposition.</title>
        <authorList>
            <person name="Regnier V."/>
            <person name="Meddeb M."/>
            <person name="Lecointre G."/>
            <person name="Richard F."/>
            <person name="Duverger A."/>
            <person name="Nguyen V.C."/>
            <person name="Dutrillaux B."/>
            <person name="Bernheim A."/>
            <person name="Danglot G."/>
        </authorList>
    </citation>
    <scope>NUCLEOTIDE SEQUENCE [GENOMIC DNA] OF 707-782</scope>
</reference>
<reference key="13">
    <citation type="journal article" date="1995" name="Genomics">
        <title>Genomic organization of the neurofibromatosis 1 gene (NF1).</title>
        <authorList>
            <person name="Li Y."/>
            <person name="O'Connell P."/>
            <person name="Breidenbach H.H."/>
            <person name="Cawthon R.M."/>
            <person name="Stevens J."/>
            <person name="Xu G."/>
            <person name="Neil S."/>
            <person name="Robertson M."/>
            <person name="White R."/>
            <person name="Viskochil D."/>
        </authorList>
    </citation>
    <scope>NUCLEOTIDE SEQUENCE [GENOMIC DNA] OF 751-1611 (ISOFORMS I AND II)</scope>
</reference>
<reference key="14">
    <citation type="journal article" date="1990" name="Cell">
        <title>The GAP-related domain of the neurofibromatosis type 1 gene product interacts with ras p21.</title>
        <authorList>
            <person name="Martin G.A."/>
            <person name="Viskochil D."/>
            <person name="Bollag G."/>
            <person name="McCabe P.C."/>
            <person name="Crosier W.J."/>
            <person name="Haubruck H."/>
            <person name="Conroy L."/>
            <person name="Clark R."/>
            <person name="O'Connell P."/>
            <person name="Cawthon R.M."/>
            <person name="Innis M."/>
            <person name="McCormick F."/>
        </authorList>
    </citation>
    <scope>NUCLEOTIDE SEQUENCE [MRNA] OF 1090-1598 (ISOFORM 4)</scope>
</reference>
<reference key="15">
    <citation type="journal article" date="1991" name="Oncogene">
        <title>Differential expression of two types of the neurofibromatosis type 1 (NF1) gene transcripts related to neuronal differentiation.</title>
        <authorList>
            <person name="Nishi T."/>
            <person name="Lee P.S."/>
            <person name="Oka K."/>
            <person name="Levin V.A."/>
            <person name="Tanase S."/>
            <person name="Morino Y."/>
            <person name="Saya H."/>
        </authorList>
    </citation>
    <scope>NUCLEOTIDE SEQUENCE [MRNA] OF 1168-1566 (ISOFORMS I AND II)</scope>
</reference>
<reference key="16">
    <citation type="journal article" date="1993" name="Mol. Cell. Biol.">
        <title>A conserved alternative splice in the von Recklinghausen neurofibromatosis (NF1) gene produces two neurofibromin isoforms, both of which have GTPase-activating protein activity.</title>
        <authorList>
            <person name="Andersen L.B."/>
            <person name="Ballester R."/>
            <person name="Marchuk D.A."/>
            <person name="Chang E."/>
            <person name="Gutmann D.H."/>
            <person name="Saulino A.M."/>
            <person name="Camonis J."/>
            <person name="Wigler M."/>
            <person name="Collins F.S."/>
        </authorList>
    </citation>
    <scope>NUCLEOTIDE SEQUENCE [MRNA] OF 1371-1391 (ISOFORM II)</scope>
    <scope>FUNCTION</scope>
    <scope>TISSUE SPECIFICITY</scope>
</reference>
<reference key="17">
    <citation type="journal article" date="1991" name="Biochem. Biophys. Res. Commun.">
        <title>Brain tumors predominantly express the neurofibromatosis type 1 gene transcripts containing the 63 base insert in the region coding for GTPase activating protein-related domain.</title>
        <authorList>
            <person name="Suzuki Y."/>
            <person name="Suzuki H."/>
            <person name="Kayama T."/>
            <person name="Yoshimoto T."/>
            <person name="Shibahara S."/>
        </authorList>
    </citation>
    <scope>NUCLEOTIDE SEQUENCE [MRNA] OF 1371-1391 (ISOFORM II)</scope>
</reference>
<reference key="18">
    <citation type="journal article" date="1990" name="Cell">
        <title>The NF1 locus encodes a protein functionally related to mammalian GAP and yeast IRA proteins.</title>
        <authorList>
            <person name="Ballester R."/>
            <person name="Marchuk D.A."/>
            <person name="Boguski M.S."/>
            <person name="Saulino A.M."/>
            <person name="Letcher R."/>
            <person name="Wigler M."/>
            <person name="Collins F.S."/>
        </authorList>
    </citation>
    <scope>FUNCTION</scope>
</reference>
<reference key="19">
    <citation type="journal article" date="1996" name="Nucleic Acids Res.">
        <title>The neurofibromatosis type I messenger RNA undergoes base-modification RNA editing.</title>
        <authorList>
            <person name="Skuse G.R."/>
            <person name="Cappione A.J."/>
            <person name="Sowden M."/>
            <person name="Metheny L.J."/>
            <person name="Smith H.C."/>
        </authorList>
    </citation>
    <scope>RNA EDITING</scope>
</reference>
<reference key="20">
    <citation type="journal article" date="2002" name="Am. J. Hum. Genet.">
        <title>C--&gt;U editing of neurofibromatosis 1 mRNA occurs in tumors that express both the type II transcript and apobec-1, the catalytic subunit of the apolipoprotein B mRNA-editing enzyme.</title>
        <authorList>
            <person name="Mukhopadhyay D."/>
            <person name="Anant S."/>
            <person name="Lee R.M."/>
            <person name="Kennedy S."/>
            <person name="Viskochil D."/>
            <person name="Davidson N.O."/>
        </authorList>
    </citation>
    <scope>RNA EDITING</scope>
</reference>
<reference key="21">
    <citation type="journal article" date="1994" name="Hum. Mutat.">
        <title>Molecular basis of neurofibromatosis type 1 (NF1): mutation analysis and polymorphisms in the NF1 gene.</title>
        <authorList>
            <person name="Upadhyaya M."/>
            <person name="Shaw D.J."/>
            <person name="Harper P.S."/>
        </authorList>
    </citation>
    <scope>REVIEW ON VARIANTS</scope>
</reference>
<reference key="22">
    <citation type="journal article" date="1996" name="J. Med. Genet.">
        <title>Molecular genetics of neurofibromatosis type 1 (NF1).</title>
        <authorList>
            <person name="Shen M.H."/>
            <person name="Harper P.S."/>
            <person name="Upadhyaya M."/>
        </authorList>
    </citation>
    <scope>REVIEW ON VARIANTS</scope>
</reference>
<reference key="23">
    <citation type="journal article" date="2004" name="FEBS Lett.">
        <title>Neurofibromin is actively transported to the nucleus.</title>
        <authorList>
            <person name="Vandenbroucke I."/>
            <person name="Van Oostveldt P."/>
            <person name="Coene E."/>
            <person name="De Paepe A."/>
            <person name="Messiaen L."/>
        </authorList>
    </citation>
    <scope>SUBCELLULAR LOCATION</scope>
    <scope>NUCLEAR LOCALIZATION SIGNAL</scope>
</reference>
<reference key="24">
    <citation type="journal article" date="2008" name="J. Proteome Res.">
        <title>Combining protein-based IMAC, peptide-based IMAC, and MudPIT for efficient phosphoproteomic analysis.</title>
        <authorList>
            <person name="Cantin G.T."/>
            <person name="Yi W."/>
            <person name="Lu B."/>
            <person name="Park S.K."/>
            <person name="Xu T."/>
            <person name="Lee J.-D."/>
            <person name="Yates J.R. III"/>
        </authorList>
    </citation>
    <scope>IDENTIFICATION BY MASS SPECTROMETRY [LARGE SCALE ANALYSIS]</scope>
    <source>
        <tissue>Cervix carcinoma</tissue>
    </source>
</reference>
<reference key="25">
    <citation type="journal article" date="2008" name="Mol. Cell">
        <title>Kinase-selective enrichment enables quantitative phosphoproteomics of the kinome across the cell cycle.</title>
        <authorList>
            <person name="Daub H."/>
            <person name="Olsen J.V."/>
            <person name="Bairlein M."/>
            <person name="Gnad F."/>
            <person name="Oppermann F.S."/>
            <person name="Korner R."/>
            <person name="Greff Z."/>
            <person name="Keri G."/>
            <person name="Stemmann O."/>
            <person name="Mann M."/>
        </authorList>
    </citation>
    <scope>IDENTIFICATION BY MASS SPECTROMETRY [LARGE SCALE ANALYSIS]</scope>
    <source>
        <tissue>Cervix carcinoma</tissue>
    </source>
</reference>
<reference key="26">
    <citation type="journal article" date="2008" name="Proc. Natl. Acad. Sci. U.S.A.">
        <title>A quantitative atlas of mitotic phosphorylation.</title>
        <authorList>
            <person name="Dephoure N."/>
            <person name="Zhou C."/>
            <person name="Villen J."/>
            <person name="Beausoleil S.A."/>
            <person name="Bakalarski C.E."/>
            <person name="Elledge S.J."/>
            <person name="Gygi S.P."/>
        </authorList>
    </citation>
    <scope>PHOSPHORYLATION [LARGE SCALE ANALYSIS] AT SER-864; SER-2188; SER-2515; SER-2521 AND SER-2543</scope>
    <scope>IDENTIFICATION BY MASS SPECTROMETRY [LARGE SCALE ANALYSIS]</scope>
    <source>
        <tissue>Cervix carcinoma</tissue>
    </source>
</reference>
<reference key="27">
    <citation type="journal article" date="2009" name="Anal. Chem.">
        <title>Lys-N and trypsin cover complementary parts of the phosphoproteome in a refined SCX-based approach.</title>
        <authorList>
            <person name="Gauci S."/>
            <person name="Helbig A.O."/>
            <person name="Slijper M."/>
            <person name="Krijgsveld J."/>
            <person name="Heck A.J."/>
            <person name="Mohammed S."/>
        </authorList>
    </citation>
    <scope>IDENTIFICATION BY MASS SPECTROMETRY [LARGE SCALE ANALYSIS]</scope>
</reference>
<reference key="28">
    <citation type="journal article" date="2009" name="Mol. Cell. Proteomics">
        <title>Large-scale proteomics analysis of the human kinome.</title>
        <authorList>
            <person name="Oppermann F.S."/>
            <person name="Gnad F."/>
            <person name="Olsen J.V."/>
            <person name="Hornberger R."/>
            <person name="Greff Z."/>
            <person name="Keri G."/>
            <person name="Mann M."/>
            <person name="Daub H."/>
        </authorList>
    </citation>
    <scope>IDENTIFICATION BY MASS SPECTROMETRY [LARGE SCALE ANALYSIS]</scope>
</reference>
<reference key="29">
    <citation type="journal article" date="2009" name="Sci. Signal.">
        <title>Quantitative phosphoproteomic analysis of T cell receptor signaling reveals system-wide modulation of protein-protein interactions.</title>
        <authorList>
            <person name="Mayya V."/>
            <person name="Lundgren D.H."/>
            <person name="Hwang S.-I."/>
            <person name="Rezaul K."/>
            <person name="Wu L."/>
            <person name="Eng J.K."/>
            <person name="Rodionov V."/>
            <person name="Han D.K."/>
        </authorList>
    </citation>
    <scope>PHOSPHORYLATION [LARGE SCALE ANALYSIS] AT SER-864; SER-876 AND SER-2515</scope>
    <scope>IDENTIFICATION BY MASS SPECTROMETRY [LARGE SCALE ANALYSIS]</scope>
    <source>
        <tissue>Leukemic T-cell</tissue>
    </source>
</reference>
<reference key="30">
    <citation type="journal article" date="2010" name="Sci. Signal.">
        <title>Quantitative phosphoproteomics reveals widespread full phosphorylation site occupancy during mitosis.</title>
        <authorList>
            <person name="Olsen J.V."/>
            <person name="Vermeulen M."/>
            <person name="Santamaria A."/>
            <person name="Kumar C."/>
            <person name="Miller M.L."/>
            <person name="Jensen L.J."/>
            <person name="Gnad F."/>
            <person name="Cox J."/>
            <person name="Jensen T.S."/>
            <person name="Nigg E.A."/>
            <person name="Brunak S."/>
            <person name="Mann M."/>
        </authorList>
    </citation>
    <scope>PHOSPHORYLATION [LARGE SCALE ANALYSIS] AT SER-864 AND SER-2817</scope>
    <scope>IDENTIFICATION BY MASS SPECTROMETRY [LARGE SCALE ANALYSIS]</scope>
    <source>
        <tissue>Cervix carcinoma</tissue>
    </source>
</reference>
<reference key="31">
    <citation type="journal article" date="2011" name="BMC Syst. Biol.">
        <title>Initial characterization of the human central proteome.</title>
        <authorList>
            <person name="Burkard T.R."/>
            <person name="Planyavsky M."/>
            <person name="Kaupe I."/>
            <person name="Breitwieser F.P."/>
            <person name="Buerckstuemmer T."/>
            <person name="Bennett K.L."/>
            <person name="Superti-Furga G."/>
            <person name="Colinge J."/>
        </authorList>
    </citation>
    <scope>IDENTIFICATION BY MASS SPECTROMETRY [LARGE SCALE ANALYSIS]</scope>
</reference>
<reference key="32">
    <citation type="journal article" date="2011" name="Sci. Signal.">
        <title>System-wide temporal characterization of the proteome and phosphoproteome of human embryonic stem cell differentiation.</title>
        <authorList>
            <person name="Rigbolt K.T."/>
            <person name="Prokhorova T.A."/>
            <person name="Akimov V."/>
            <person name="Henningsen J."/>
            <person name="Johansen P.T."/>
            <person name="Kratchmarova I."/>
            <person name="Kassem M."/>
            <person name="Mann M."/>
            <person name="Olsen J.V."/>
            <person name="Blagoev B."/>
        </authorList>
    </citation>
    <scope>PHOSPHORYLATION [LARGE SCALE ANALYSIS] AT SER-2543 AND SER-2817</scope>
    <scope>IDENTIFICATION BY MASS SPECTROMETRY [LARGE SCALE ANALYSIS]</scope>
</reference>
<reference key="33">
    <citation type="journal article" date="2012" name="EMBO Mol. Med.">
        <title>5-HT(6) receptor recruitment of mTOR as a mechanism for perturbed cognition in schizophrenia.</title>
        <authorList>
            <person name="Meffre J."/>
            <person name="Chaumont-Dubel S."/>
            <person name="Mannoury la Cour C."/>
            <person name="Loiseau F."/>
            <person name="Watson D.J."/>
            <person name="Dekeyne A."/>
            <person name="Seveno M."/>
            <person name="Rivet J.M."/>
            <person name="Gaven F."/>
            <person name="Deleris P."/>
            <person name="Herve D."/>
            <person name="Fone K.C."/>
            <person name="Bockaert J."/>
            <person name="Millan M.J."/>
            <person name="Marin P."/>
        </authorList>
    </citation>
    <scope>INTERACTION WITH HTR6</scope>
</reference>
<reference key="34">
    <citation type="journal article" date="2013" name="J. Proteome Res.">
        <title>Toward a comprehensive characterization of a human cancer cell phosphoproteome.</title>
        <authorList>
            <person name="Zhou H."/>
            <person name="Di Palma S."/>
            <person name="Preisinger C."/>
            <person name="Peng M."/>
            <person name="Polat A.N."/>
            <person name="Heck A.J."/>
            <person name="Mohammed S."/>
        </authorList>
    </citation>
    <scope>PHOSPHORYLATION [LARGE SCALE ANALYSIS] AT SER-864; SER-876; SER-2188; SER-2515; SER-2521; SER-2523; SER-2543; THR-2565; SER-2597 AND SER-2802</scope>
    <scope>IDENTIFICATION BY MASS SPECTROMETRY [LARGE SCALE ANALYSIS]</scope>
    <source>
        <tissue>Cervix carcinoma</tissue>
        <tissue>Erythroleukemia</tissue>
    </source>
</reference>
<reference key="35">
    <citation type="journal article" date="2014" name="J. Proteomics">
        <title>An enzyme assisted RP-RPLC approach for in-depth analysis of human liver phosphoproteome.</title>
        <authorList>
            <person name="Bian Y."/>
            <person name="Song C."/>
            <person name="Cheng K."/>
            <person name="Dong M."/>
            <person name="Wang F."/>
            <person name="Huang J."/>
            <person name="Sun D."/>
            <person name="Wang L."/>
            <person name="Ye M."/>
            <person name="Zou H."/>
        </authorList>
    </citation>
    <scope>PHOSPHORYLATION [LARGE SCALE ANALYSIS] AT SER-2543 AND SER-2817</scope>
    <scope>IDENTIFICATION BY MASS SPECTROMETRY [LARGE SCALE ANALYSIS]</scope>
    <source>
        <tissue>Liver</tissue>
    </source>
</reference>
<reference key="36">
    <citation type="journal article" date="2021" name="Am. J. Hum. Genet.">
        <title>SPRED2 loss-of-function causes a recessive Noonan syndrome-like phenotype.</title>
        <authorList>
            <person name="Motta M."/>
            <person name="Fasano G."/>
            <person name="Gredy S."/>
            <person name="Brinkmann J."/>
            <person name="Bonnard A.A."/>
            <person name="Simsek-Kiper P.O."/>
            <person name="Gulec E.Y."/>
            <person name="Essaddam L."/>
            <person name="Utine G.E."/>
            <person name="Guarnetti Prandi I."/>
            <person name="Venditti M."/>
            <person name="Pantaleoni F."/>
            <person name="Radio F.C."/>
            <person name="Ciolfi A."/>
            <person name="Petrini S."/>
            <person name="Consoli F."/>
            <person name="Vignal C."/>
            <person name="Hepbasli D."/>
            <person name="Ullrich M."/>
            <person name="de Boer E."/>
            <person name="Vissers L.E.L.M."/>
            <person name="Gritli S."/>
            <person name="Rossi C."/>
            <person name="De Luca A."/>
            <person name="Ben Becher S."/>
            <person name="Gelb B.D."/>
            <person name="Dallapiccola B."/>
            <person name="Lauri A."/>
            <person name="Chillemi G."/>
            <person name="Schuh K."/>
            <person name="Cave H."/>
            <person name="Zenker M."/>
            <person name="Tartaglia M."/>
        </authorList>
    </citation>
    <scope>INTERACTION WITH SPRED2</scope>
    <scope>SUBCELLULAR LOCATION</scope>
</reference>
<reference key="37">
    <citation type="journal article" date="1998" name="EMBO J.">
        <title>Structural analysis of the GAP-related domain from neurofibromin and its implications.</title>
        <authorList>
            <person name="Scheffzek K."/>
            <person name="Ahmadian M.R."/>
            <person name="Wiesmuller L."/>
            <person name="Kabsch W."/>
            <person name="Stege P."/>
            <person name="Schmitz F."/>
            <person name="Wittinghofer A."/>
        </authorList>
    </citation>
    <scope>X-RAY CRYSTALLOGRAPHY (2.50 ANGSTROMS) OF 1198-1551</scope>
</reference>
<reference key="38">
    <citation type="journal article" date="2006" name="EMBO Rep.">
        <title>A novel bipartite phospholipid-binding module in the neurofibromatosis type 1 protein.</title>
        <authorList>
            <person name="D'Angelo I."/>
            <person name="Welti S."/>
            <person name="Bonneau F."/>
            <person name="Scheffzek K."/>
        </authorList>
    </citation>
    <scope>X-RAY CRYSTALLOGRAPHY (2.30 ANGSTROMS) OF 1581-1837</scope>
    <scope>LIPID-BINDING</scope>
    <scope>DOMAIN</scope>
    <scope>MUTAGENESIS OF LYS-1691; ARG-1695; ARG-1769 AND LYS-1771</scope>
</reference>
<reference key="39">
    <citation type="journal article" date="2007" name="J. Mol. Biol.">
        <title>The sec14 homology module of neurofibromin binds cellular glycerophospholipids: mass spectrometry and structure of a lipid complex.</title>
        <authorList>
            <person name="Welti S."/>
            <person name="Fraterman S."/>
            <person name="D'Angelo I."/>
            <person name="Wilm M."/>
            <person name="Scheffzek K."/>
        </authorList>
    </citation>
    <scope>X-RAY CRYSTALLOGRAPHY (2.50 ANGSTROMS) OF 1566-1837 IN COMPLEX WITH PHOSPHOLIPID</scope>
    <scope>LIPID-BINDING</scope>
    <scope>DOMAIN</scope>
</reference>
<reference key="40">
    <citation type="journal article" date="2011" name="Hum. Mutat.">
        <title>Structural and biochemical consequences of NF1 associated nontruncating mutations in the Sec14-PH module of neurofibromin.</title>
        <authorList>
            <person name="Welti S."/>
            <person name="Kuhn S."/>
            <person name="D'Angelo I."/>
            <person name="Brugger B."/>
            <person name="Kaufmann D."/>
            <person name="Scheffzek K."/>
        </authorList>
    </citation>
    <scope>X-RAY CRYSTALLOGRAPHY (2.19 ANGSTROMS) OF 1581-1837 OF VARIANT NF1 VAL-1605 AND MUTANT LYS-1771 DEL IN COMPLEX WITH LIPID</scope>
    <scope>CHARACTERIZATION OF VARIANT NF1 VAL-1605</scope>
    <scope>MUTAGENESIS OF LYS-1771</scope>
    <scope>LIPID-BINDING</scope>
    <scope>DOMAIN</scope>
</reference>
<reference key="41">
    <citation type="journal article" date="1992" name="Cell">
        <title>Somatic mutations in the neurofibromatosis 1 gene in human tumors.</title>
        <authorList>
            <person name="Li Y."/>
            <person name="Bollag G."/>
            <person name="Clark R."/>
            <person name="Stevens J."/>
            <person name="Conroy L."/>
            <person name="Fults D."/>
            <person name="Ward K."/>
            <person name="Friedman E."/>
            <person name="Samowitz W."/>
            <person name="Robertson M."/>
            <person name="Bradley P."/>
            <person name="McCormick F."/>
            <person name="White R."/>
            <person name="Cawthon R.M."/>
        </authorList>
    </citation>
    <scope>VARIANT GLU-1444</scope>
</reference>
<reference key="42">
    <citation type="journal article" date="1992" name="Hum. Mol. Genet.">
        <title>Analysis of mutations at the neurofibromatosis 1 (NF1) locus.</title>
        <authorList>
            <person name="Upadhyaya M."/>
            <person name="Shen M.H."/>
            <person name="Cherryson A."/>
            <person name="Farnham J."/>
            <person name="Maynard J."/>
            <person name="Huson S.M."/>
            <person name="Harper P.S."/>
        </authorList>
    </citation>
    <scope>VARIANTS NF1 MET-2164 AND ASN-2192</scope>
</reference>
<reference key="43">
    <citation type="journal article" date="1993" name="Am. J. Hum. Genet.">
        <title>Tandem duplication within a neurofibromatosis type 1 (NF1) gene exon in a family with features of Watson syndrome and Noonan syndrome.</title>
        <authorList>
            <person name="Tassabehji M."/>
            <person name="Strachan T."/>
            <person name="Sharland M."/>
            <person name="Colley A."/>
            <person name="Donnai D."/>
            <person name="Harris R."/>
            <person name="Thakker N."/>
        </authorList>
    </citation>
    <scope>VARIANT GLY-HIS-GLU-GLN-GLN-LYS-LEU-PRO-ALA-ALA-THR-LEU-ALA-LEU-1733 INS</scope>
</reference>
<reference key="44">
    <citation type="journal article" date="1993" name="Hum. Mol. Genet.">
        <title>Neurofibromatosis type 1 (NF1): the search for mutations by PCR-heteroduplex analysis on Hydrolink gels.</title>
        <authorList>
            <person name="Shen M.H."/>
            <person name="Harper P.S."/>
            <person name="Upadhyaya M."/>
        </authorList>
    </citation>
    <scope>VARIANT MET-991 DEL</scope>
</reference>
<reference key="45">
    <citation type="journal article" date="1994" name="Hum. Mol. Genet.">
        <title>Characterisation of inherited and sporadic mutations in neurofibromatosis type-1.</title>
        <authorList>
            <person name="Purandare S.M."/>
            <person name="Lanyon W.G."/>
            <person name="Connor J.M."/>
        </authorList>
    </citation>
    <scope>VARIANTS NF1 ASP-1166 AND ARG-1440</scope>
</reference>
<reference key="46">
    <citation type="journal article" date="1994" name="Hum. Mutat.">
        <title>Two NF1 mutations: frameshift in the GAP-related domain, and loss of two codons toward the 3' end of the gene.</title>
        <authorList>
            <person name="Abernathy C.R."/>
            <person name="Colman S.D."/>
            <person name="Kousseff B.G."/>
            <person name="Wallace M.R."/>
        </authorList>
    </citation>
    <scope>VARIANT NF1 2387-ASN-PHE-2388 DEL</scope>
</reference>
<reference key="47">
    <citation type="journal article" date="1995" name="J. Med. Genet.">
        <title>Characterisation of germline mutations in the neurofibromatosis type 1 (NF1) gene.</title>
        <authorList>
            <person name="Upadhyaya M."/>
            <person name="Maynard J."/>
            <person name="Osborn M.J."/>
            <person name="Huson S.M."/>
            <person name="Ponder M."/>
            <person name="Ponder B.A.J."/>
            <person name="Harper P.S."/>
        </authorList>
    </citation>
    <scope>VARIANT NF1 ALA-2631</scope>
</reference>
<reference key="48">
    <citation type="journal article" date="1996" name="Hum. Genet.">
        <title>Scanning the first part of the neurofibromatosis type 1 gene by RNA-SSCP: identification of three novel mutations and of two new polymorphisms.</title>
        <authorList>
            <person name="Gasparini P."/>
            <person name="D'Agruma L."/>
            <person name="de Cillis G.P."/>
            <person name="Balestrazzi P."/>
            <person name="Mingarelli R."/>
            <person name="Zelante L."/>
        </authorList>
    </citation>
    <scope>VARIANT NF1 ARG-629</scope>
</reference>
<reference key="49">
    <citation type="journal article" date="1996" name="Hum. Mutat.">
        <title>Neurofibromatosis type I gene mutation in a patient with features of LEOPARD syndrome.</title>
        <authorList>
            <person name="Wu R."/>
            <person name="Legius E."/>
            <person name="Robberecht W."/>
            <person name="Dumoulin M."/>
            <person name="Cassiman J.-J."/>
            <person name="Fryns J.-P."/>
        </authorList>
    </citation>
    <scope>VARIANT NF1 ARG-1035</scope>
</reference>
<reference key="50">
    <citation type="journal article" date="1997" name="Hum. Genet.">
        <title>Mutational and functional analysis of the neurofibromatosis type 1 (NF1) gene.</title>
        <authorList>
            <person name="Upadhyaya M."/>
            <person name="Osborn M.J."/>
            <person name="Maynard J."/>
            <person name="Kim M.R."/>
            <person name="Tamanoi F."/>
            <person name="Cooper D.N."/>
        </authorList>
    </citation>
    <scope>VARIANTS NF1 SER-1412; GLN-1440; GLU-1444 AND GLY-1489</scope>
</reference>
<reference key="51">
    <citation type="journal article" date="1997" name="Hum. Genet.">
        <title>Characterization and significance of nine novel mutations in exon 16 of the neurofibromatosis type 1 (NF1) gene.</title>
        <authorList>
            <person name="Maynard J."/>
            <person name="Krawczak M."/>
            <person name="Upadhyaya M."/>
        </authorList>
    </citation>
    <scope>VARIANTS NF1 ARG-844 AND PRO-898</scope>
</reference>
<reference key="52">
    <citation type="journal article" date="1997" name="Hum. Mutat.">
        <title>Novel and recurrent mutations in the neurofibromatosis type 1 (NF1) gene.</title>
        <authorList>
            <person name="Hudson J."/>
            <person name="Wu C.L."/>
            <person name="Tassabehji M."/>
            <person name="Summers E.M."/>
            <person name="Simon S."/>
            <person name="Super M."/>
            <person name="Donnai D."/>
            <person name="Thakker N."/>
        </authorList>
    </citation>
    <scope>VARIANT NF1 ARG-1952</scope>
</reference>
<reference key="53">
    <citation type="journal article" date="1997" name="Hum. Mutat.">
        <title>Six novel mutations in the neurofibromatosis type 1 (NF1) gene.</title>
        <authorList>
            <person name="Upadhyaya M."/>
            <person name="Maynard J."/>
            <person name="Osborn M.J."/>
            <person name="Harper P.S."/>
        </authorList>
    </citation>
    <scope>VARIANTS NF1 GLY-338 AND TRP-1611</scope>
</reference>
<reference key="54">
    <citation type="journal article" date="1998" name="Hum. Mol. Genet.">
        <title>Selective disactivation of neurofibromin GAP activity in neurofibromatosis type 1 (NF1).</title>
        <authorList>
            <person name="Klose A."/>
            <person name="Ahmadian M.R."/>
            <person name="Schuelke M."/>
            <person name="Scheffzek K."/>
            <person name="Hoffmeyer S."/>
            <person name="Gewies A."/>
            <person name="Schmitz F."/>
            <person name="Kaufmann D."/>
            <person name="Peters H."/>
            <person name="Wittinghofer A."/>
            <person name="Nuernberg P."/>
        </authorList>
    </citation>
    <scope>VARIANT NF1 PRO-1276</scope>
</reference>
<reference key="55">
    <citation type="journal article" date="1998" name="Hum. Mutat.">
        <title>Analysis of CpG C-to-T mutations in neurofibromatosis type 1.</title>
        <authorList>
            <person name="Krkljus S."/>
            <person name="Abernathy C.R."/>
            <person name="Johnson J.S."/>
            <person name="Williams C.A."/>
            <person name="Driscoll D.J."/>
            <person name="Zori R."/>
            <person name="Stalker H.J."/>
            <person name="Rasmussen S.A."/>
            <person name="Collins F.S."/>
            <person name="Kousseff B.G."/>
            <person name="Baumbach L."/>
            <person name="Wallace M.R."/>
        </authorList>
    </citation>
    <scope>VARIANTS NF1 HIS-765 AND GLY-1204</scope>
</reference>
<reference key="56">
    <citation type="journal article" date="1999" name="Genet. Med.">
        <title>Exon 10b of the NF1 gene represents a mutational hotspot and harbors a recurrent missense mutation Y489C associated with aberrant splicing.</title>
        <authorList>
            <person name="Messiaen L.M."/>
            <person name="Callens T."/>
            <person name="Roux K.J."/>
            <person name="Mortier G.R."/>
            <person name="De Paepe A."/>
            <person name="Abramowicz M."/>
            <person name="Pericak-Vance M.A."/>
            <person name="Vance J.M."/>
            <person name="Wallace M.R."/>
        </authorList>
    </citation>
    <scope>VARIANT NF1 PRO-508</scope>
</reference>
<reference key="57">
    <citation type="journal article" date="1999" name="Hum. Mutat.">
        <title>A novel mutation L1425P in the GAP-region of the NF1 gene detected by temperature gradient gel electrophoresis (TGGE).</title>
        <authorList>
            <person name="Peters H."/>
            <person name="Hess D."/>
            <person name="Fahsold R."/>
            <person name="Schuelke M."/>
        </authorList>
    </citation>
    <scope>VARIANT NF1 PRO-1446</scope>
</reference>
<reference key="58">
    <citation type="journal article" date="2000" name="Am. J. Hum. Genet.">
        <title>Minor lesion mutational spectrum of the entire NF1 gene does not explain its high mutability but points to a functional domain upstream of the GAP-related domain.</title>
        <authorList>
            <person name="Fahsold R."/>
            <person name="Hoffmeyer S."/>
            <person name="Mischung C."/>
            <person name="Gille C."/>
            <person name="Ehlers C."/>
            <person name="Kuecuekceylan N."/>
            <person name="Abdel-Nour M."/>
            <person name="Gewies A."/>
            <person name="Peters H."/>
            <person name="Kaufmann D."/>
            <person name="Buske A."/>
            <person name="Tinschert S."/>
            <person name="Nuernberg P."/>
        </authorList>
    </citation>
    <scope>VARIANTS NF1 PRO-216; PRO-357; CYS-491; PRO-549; THR-581; ARG-583; PHE-665; PRO-695; PRO-763; SER-777; LYS-780; PRO-781; PRO-847; SER-1156; PRO-1250; GLN-1276; PRO-1276; PRO-1446; VAL-1605 AND ILE-2507</scope>
    <scope>VARIANT GLU-176</scope>
</reference>
<reference key="59">
    <citation type="journal article" date="2000" name="Hum. Mol. Genet.">
        <title>Mutations affecting mRNA splicing are the most common molecular defects in patients with neurofibromatosis type 1.</title>
        <authorList>
            <person name="Ars E."/>
            <person name="Serra E."/>
            <person name="Garcia J."/>
            <person name="Kruyer H."/>
            <person name="Gaona A."/>
            <person name="Lazaro C."/>
            <person name="Estivill X."/>
        </authorList>
    </citation>
    <scope>VARIANTS NF1 SER-117; TRP-1204; PRO-1446 AND 2387-ASN-PHE-2388 DEL</scope>
</reference>
<reference key="60">
    <citation type="journal article" date="2000" name="Hum. Mol. Genet.">
        <authorList>
            <person name="Ars E."/>
            <person name="Serra E."/>
            <person name="Garcia J."/>
            <person name="Kruyer H."/>
            <person name="Gaona A."/>
            <person name="Lazaro C."/>
            <person name="Estivill X."/>
        </authorList>
    </citation>
    <scope>ERRATUM OF PUBMED:10607834</scope>
</reference>
<reference key="61">
    <citation type="journal article" date="2000" name="Hum. Mutat.">
        <title>NF1 gene analysis focused on CpG-rich exons in a cohort of 93 patients with neurofibromatosis type 1.</title>
        <authorList>
            <person name="Boulandet E.G."/>
            <person name="Pantel J."/>
            <person name="Cazeneuve C."/>
            <person name="Van Gijn M."/>
            <person name="Vidaud D."/>
            <person name="Lemay S."/>
            <person name="Martin J."/>
            <person name="Zeller J."/>
            <person name="Revuz J."/>
            <person name="Goossens M."/>
            <person name="Amselem S."/>
            <person name="Wolkenstein P."/>
        </authorList>
    </citation>
    <scope>VARIANT NF1 PHE-844</scope>
</reference>
<reference key="62">
    <citation type="journal article" date="2001" name="Am. J. Hum. Genet.">
        <title>Spinal neurofibromatosis without cafe-au-lait macules in two families with null mutations of the NF1 gene.</title>
        <authorList>
            <person name="Kaufmann D."/>
            <person name="Mueller R."/>
            <person name="Bartelt B."/>
            <person name="Wolf M."/>
            <person name="Kunzi-Rapp K."/>
            <person name="Hanemann C.O."/>
            <person name="Fahsold R."/>
            <person name="Hein C."/>
            <person name="Vogel W."/>
            <person name="Assum G."/>
        </authorList>
    </citation>
    <scope>VARIANT SPINAL FSNF PRO-2088</scope>
</reference>
<reference key="63">
    <citation type="journal article" date="2001" name="Hum. Genet.">
        <title>Evaluation of denaturing high performance liquid chromatography (DHPLC) for the mutational analysis of the neurofibromatosis type 1 (NF1) gene.</title>
        <authorList>
            <person name="Han S.S."/>
            <person name="Cooper D.N."/>
            <person name="Upadhyaya M.N."/>
        </authorList>
    </citation>
    <scope>VARIANTS NF1 LYS-780; CYS-784; PRO-1147; CYS-1193; ARG-1444; SER-1785; ASN-2012 AND LYS-2357</scope>
</reference>
<reference key="64">
    <citation type="journal article" date="2002" name="Hum. Mutat.">
        <title>NF1 mutations in neurofibromatosis 1 patients with plexiform neurofibromas.</title>
        <authorList>
            <person name="Kluwe L."/>
            <person name="Friedrich R.E."/>
            <person name="Korf B."/>
            <person name="Fahsold R."/>
            <person name="Mautner V.-F."/>
        </authorList>
    </citation>
    <scope>VARIANTS NF1 PHE-82; ARG-784 AND GLU-1444</scope>
</reference>
<reference key="65">
    <citation type="journal article" date="2003" name="Am. J. Med. Genet. A">
        <title>Different mutations in the NF1 gene are associated with neurofibromatosis-Noonan syndrome (NFNS).</title>
        <authorList>
            <person name="Baralle D."/>
            <person name="Mattocks C."/>
            <person name="Kalidas K."/>
            <person name="Elmslie F."/>
            <person name="Whittaker J."/>
            <person name="Lees M."/>
            <person name="Ragge N."/>
            <person name="Patton M.A."/>
            <person name="Winter R.M."/>
            <person name="ffrench-Constant C."/>
        </authorList>
    </citation>
    <scope>VARIANT NFNS GLU-1459 DEL</scope>
</reference>
<reference key="66">
    <citation type="journal article" date="2003" name="Hum. Genet.">
        <title>Neurofibromatosis type 1 gene as a mutational target in a mismatch repair-deficient cell type.</title>
        <authorList>
            <person name="Wang Q."/>
            <person name="Montmain G."/>
            <person name="Ruano E."/>
            <person name="Upadhyaya M."/>
            <person name="Dudley S."/>
            <person name="Liskay R.M."/>
            <person name="Thibodeau S.N."/>
            <person name="Puisieux A."/>
        </authorList>
    </citation>
    <scope>VARIANTS NF1 TYR-93; VAL-604; ARG-844 AND PRO-898</scope>
    <scope>VARIANTS ASP-74; GLU-176; ARG-712 AND GLN-1276</scope>
</reference>
<reference key="67">
    <citation type="journal article" date="2003" name="Hum. Mutat.">
        <title>NF1 gene analysis based on DHPLC.</title>
        <authorList>
            <person name="De Luca A."/>
            <person name="Buccino A."/>
            <person name="Gianni D."/>
            <person name="Mangino M."/>
            <person name="Giustini S."/>
            <person name="Richetta A."/>
            <person name="Divona L."/>
            <person name="Calvieri S."/>
            <person name="Mingarelli R."/>
            <person name="Dallapiccola B."/>
        </authorList>
    </citation>
    <scope>VARIANTS NF1 LYS-780; PRO-847; GLU-848 AND ARG-968; ASN-1444; LEU-1953 DEL AND ARG-2001</scope>
</reference>
<reference key="68">
    <citation type="journal article" date="2003" name="J. Med. Genet.">
        <title>NF1 mutations and clinical spectrum in patients with spinal neurofibromas.</title>
        <authorList>
            <person name="Kluwe L."/>
            <person name="Tatagiba M."/>
            <person name="Fuensterer C."/>
            <person name="Mautner V.F."/>
        </authorList>
    </citation>
    <scope>VARIANTS NF1 ARG-578; PRO-920 AND ALA-2221</scope>
</reference>
<reference key="69">
    <citation type="journal article" date="2004" name="Hum. Mutat.">
        <title>Disruption of exonic splicing enhancer elements is the principal cause of exon skipping associated with seven nonsense or missense alleles of NF1.</title>
        <authorList>
            <person name="Zatkova A."/>
            <person name="Messiaen L."/>
            <person name="Vandenbroucke I."/>
            <person name="Wieser R."/>
            <person name="Fonatsch C."/>
            <person name="Krainer A.R."/>
            <person name="Wimmer K."/>
        </authorList>
    </citation>
    <scope>VARIANT NF1 VAL-186</scope>
    <scope>CHARACTERIZATION OF VARIANT NF1 VAL-186</scope>
</reference>
<reference key="70">
    <citation type="journal article" date="2004" name="Hum. Mutat.">
        <title>Novel and recurrent mutations in the NF1 gene in Italian patients with neurofibromatosis type 1.</title>
        <authorList>
            <person name="De Luca A."/>
            <person name="Schirinzi A."/>
            <person name="Buccino A."/>
            <person name="Bottillo I."/>
            <person name="Sinibaldi L."/>
            <person name="Torrente I."/>
            <person name="Ciavarella A."/>
            <person name="Dottorini T."/>
            <person name="Porciello R."/>
            <person name="Giustini S."/>
            <person name="Calvieri S."/>
            <person name="Dallapiccola B."/>
        </authorList>
    </citation>
    <scope>VARIANTS NF1 ASN-157; ARG-629; SER-777; LYS-780; ARG-784; PRO-847; GLU-848; ARG-968; ASN-1444; LEU-1953 DEL AND ARG-2001</scope>
    <scope>VARIANT GLU-176</scope>
</reference>
<reference key="71">
    <citation type="journal article" date="2004" name="J. Med. Genet.">
        <title>Automated comparative sequence analysis identifies mutations in 89% of NF1 patients and confirms a mutation cluster in exons 11-17 distinct from the GAP related domain.</title>
        <authorList>
            <person name="Mattocks C."/>
            <person name="Baralle D."/>
            <person name="Tarpey P."/>
            <person name="ffrench-Constant C."/>
            <person name="Bobrow M."/>
            <person name="Whittaker J."/>
        </authorList>
    </citation>
    <scope>VARIANTS NF1 ARG-31; PRO-145; ARG-324; VAL-337; CYS-489; PRO-532; ARG-574; ARG-629; PHE-665; PHE-844; PRO-844; MET-991 DEL; VAL-1073; ARG-1196; GLY-1276; GLN-1276; GLU-1430; GLU-1459 DEL AND GLY-1489</scope>
    <scope>VARIANTS GLU-176 AND CYS-873</scope>
</reference>
<reference key="72">
    <citation type="journal article" date="2004" name="J. Med. Genet.">
        <title>Neurofibromatous neuropathy in neurofibromatosis 1 (NF1).</title>
        <authorList>
            <person name="Ferner R.E."/>
            <person name="Hughes R.A.C."/>
            <person name="Hall S.M."/>
            <person name="Upadhyaya M."/>
            <person name="Johnson M.R."/>
        </authorList>
    </citation>
    <scope>VARIANT NF1 PRO-1243</scope>
</reference>
<reference key="73">
    <citation type="journal article" date="2005" name="Am. J. Med. Genet. A">
        <title>Neurofibromatosis-Noonan syndrome: molecular evidence of the concurrence of both disorders in a patient.</title>
        <authorList>
            <person name="Bertola D.R."/>
            <person name="Pereira A.C."/>
            <person name="Passetti F."/>
            <person name="de Oliveira P.S.L."/>
            <person name="Messiaen L."/>
            <person name="Gelb B.D."/>
            <person name="Kim C.A."/>
            <person name="Krieger J.E."/>
        </authorList>
    </citation>
    <scope>VARIANT NF1 ARG-844</scope>
</reference>
<reference key="74">
    <citation type="journal article" date="2005" name="Am. J. Hum. Genet.">
        <title>NF1 gene mutations represent the major molecular event underlying neurofibromatosis-Noonan syndrome.</title>
        <authorList>
            <person name="De Luca A."/>
            <person name="Bottillo I."/>
            <person name="Sarkozy A."/>
            <person name="Carta C."/>
            <person name="Neri C."/>
            <person name="Bellacchio E."/>
            <person name="Schirinzi A."/>
            <person name="Conti E."/>
            <person name="Zampino G."/>
            <person name="Battaglia A."/>
            <person name="Majore S."/>
            <person name="Rinaldi M.M."/>
            <person name="Carella M."/>
            <person name="Marino B."/>
            <person name="Pizzuti A."/>
            <person name="Digilio M.C."/>
            <person name="Tartaglia M."/>
            <person name="Dallapiccola B."/>
        </authorList>
    </citation>
    <scope>VARIANTS NFNS ARG-194; GLU-1444; THR-1451; LEU-1453 AND GLU-1459 DEL</scope>
</reference>
<reference key="75">
    <citation type="journal article" date="2006" name="Science">
        <title>The consensus coding sequences of human breast and colorectal cancers.</title>
        <authorList>
            <person name="Sjoeblom T."/>
            <person name="Jones S."/>
            <person name="Wood L.D."/>
            <person name="Parsons D.W."/>
            <person name="Lin J."/>
            <person name="Barber T.D."/>
            <person name="Mandelker D."/>
            <person name="Leary R.J."/>
            <person name="Ptak J."/>
            <person name="Silliman N."/>
            <person name="Szabo S."/>
            <person name="Buckhaults P."/>
            <person name="Farrell C."/>
            <person name="Meeh P."/>
            <person name="Markowitz S.D."/>
            <person name="Willis J."/>
            <person name="Dawson D."/>
            <person name="Willson J.K.V."/>
            <person name="Gazdar A.F."/>
            <person name="Hartigan J."/>
            <person name="Wu L."/>
            <person name="Liu C."/>
            <person name="Parmigiani G."/>
            <person name="Park B.H."/>
            <person name="Bachman K.E."/>
            <person name="Papadopoulos N."/>
            <person name="Vogelstein B."/>
            <person name="Kinzler K.W."/>
            <person name="Velculescu V.E."/>
        </authorList>
    </citation>
    <scope>VARIANTS [LARGE SCALE ANALYSIS] ILE-1187; LEU-1951 AND ARG-2745</scope>
</reference>
<reference key="76">
    <citation type="journal article" date="2007" name="Am. J. Hum. Genet.">
        <title>An absence of cutaneous neurofibromas associated with a 3-bp inframe deletion in exon 17 of the NF1 gene (c.2970-2972 delAAT): evidence of a clinically significant NF1 genotype-phenotype correlation.</title>
        <authorList>
            <person name="Upadhyaya M."/>
            <person name="Huson S.M."/>
            <person name="Davies M."/>
            <person name="Thomas N."/>
            <person name="Chuzhanova N."/>
            <person name="Giovannini S."/>
            <person name="Evans D.G."/>
            <person name="Howard E."/>
            <person name="Kerr B."/>
            <person name="Griffiths S."/>
            <person name="Consoli C."/>
            <person name="Side L."/>
            <person name="Adams D."/>
            <person name="Pierpont M."/>
            <person name="Hachen R."/>
            <person name="Barnicoat A."/>
            <person name="Li H."/>
            <person name="Wallace P."/>
            <person name="Van Biervliet J.P."/>
            <person name="Stevenson D."/>
            <person name="Viskochil D."/>
            <person name="Baralle D."/>
            <person name="Haan E."/>
            <person name="Riccardi V."/>
            <person name="Turnpenny P."/>
            <person name="Lazaro C."/>
            <person name="Messiaen L."/>
        </authorList>
    </citation>
    <scope>VARIANT NF1 MET-991 DEL</scope>
</reference>
<reference key="77">
    <citation type="journal article" date="2009" name="Clin. Genet.">
        <title>Noonan syndrome and neurofibromatosis type I in a family with a novel mutation in NF1.</title>
        <authorList>
            <person name="Nystrom A.M."/>
            <person name="Ekvall S."/>
            <person name="Allanson J."/>
            <person name="Edeby C."/>
            <person name="Elinder M."/>
            <person name="Holmstrom G."/>
            <person name="Bondeson M.L."/>
            <person name="Anneren G."/>
        </authorList>
    </citation>
    <scope>VARIANT NFNS PHE-1411</scope>
</reference>
<reference key="78">
    <citation type="journal article" date="2011" name="Hered. Cancer Clin. Pract.">
        <title>Clinico-pathological and biomolecular findings in Italian patients with multiple cutaneous neurofibromas.</title>
        <authorList>
            <person name="Ponti G."/>
            <person name="Losi L."/>
            <person name="Martorana D."/>
            <person name="Priola M."/>
            <person name="Boni E."/>
            <person name="Pollio A."/>
            <person name="Neri T.M."/>
            <person name="Seidenari S."/>
        </authorList>
    </citation>
    <scope>VARIANT NF1 THR-160</scope>
</reference>
<reference key="79">
    <citation type="journal article" date="2012" name="Eur. J. Hum. Genet.">
        <title>Exploring the somatic NF1 mutational spectrum associated with NF1 cutaneous neurofibromas.</title>
        <authorList>
            <person name="Thomas L."/>
            <person name="Spurlock G."/>
            <person name="Eudall C."/>
            <person name="Thomas N.S."/>
            <person name="Mort M."/>
            <person name="Hamby S.E."/>
            <person name="Chuzhanova N."/>
            <person name="Brems H."/>
            <person name="Legius E."/>
            <person name="Cooper D.N."/>
            <person name="Upadhyaya M."/>
        </authorList>
    </citation>
    <scope>VARIANTS GLU-176; THR-330; ASP-393; LEU-393; PRO-519; THR-776 AND PHE-1484</scope>
</reference>
<reference key="80">
    <citation type="journal article" date="2013" name="Ann. Hum. Genet.">
        <title>Thirty-nine novel neurofibromatosis 1 (NF1) gene mutations identified in Slovak patients.</title>
        <authorList>
            <person name="Nemethova M."/>
            <person name="Bolcekova A."/>
            <person name="Ilencikova D."/>
            <person name="Durovcikova D."/>
            <person name="Hlinkova K."/>
            <person name="Hlavata A."/>
            <person name="Kovacs L."/>
            <person name="Kadasi L."/>
            <person name="Zatkova A."/>
        </authorList>
    </citation>
    <scope>VARIANTS NF1 TRP-93; ARG-1048; ARG-1189; ARG-1661 (ISOFORM I) AND THR-1918 (ISOFORM I)</scope>
</reference>
<reference key="81">
    <citation type="journal article" date="2014" name="Childs Nerv. Syst.">
        <title>The mutational spectrum of the NF1 gene in neurofibromatosis type I patients from UAE.</title>
        <authorList>
            <person name="Ben-Salem S."/>
            <person name="Al-Shamsi A.M."/>
            <person name="Ali B.R."/>
            <person name="Al-Gazali L."/>
        </authorList>
    </citation>
    <scope>VARIANT NF1 PRO-2125</scope>
</reference>
<organism>
    <name type="scientific">Homo sapiens</name>
    <name type="common">Human</name>
    <dbReference type="NCBI Taxonomy" id="9606"/>
    <lineage>
        <taxon>Eukaryota</taxon>
        <taxon>Metazoa</taxon>
        <taxon>Chordata</taxon>
        <taxon>Craniata</taxon>
        <taxon>Vertebrata</taxon>
        <taxon>Euteleostomi</taxon>
        <taxon>Mammalia</taxon>
        <taxon>Eutheria</taxon>
        <taxon>Euarchontoglires</taxon>
        <taxon>Primates</taxon>
        <taxon>Haplorrhini</taxon>
        <taxon>Catarrhini</taxon>
        <taxon>Hominidae</taxon>
        <taxon>Homo</taxon>
    </lineage>
</organism>
<accession>P21359</accession>
<accession>O00662</accession>
<accession>Q14284</accession>
<accession>Q14930</accession>
<accession>Q14931</accession>
<accession>Q9UMK3</accession>
<feature type="initiator methionine" description="Removed" evidence="1">
    <location>
        <position position="1"/>
    </location>
</feature>
<feature type="chain" id="PRO_0000010773" description="Neurofibromin">
    <location>
        <begin position="2"/>
        <end position="2839"/>
    </location>
</feature>
<feature type="chain" id="PRO_0000010774" description="Neurofibromin truncated">
    <location>
        <begin position="2"/>
        <end position="1305"/>
    </location>
</feature>
<feature type="domain" description="Ras-GAP" evidence="4">
    <location>
        <begin position="1251"/>
        <end position="1482"/>
    </location>
</feature>
<feature type="domain" description="CRAL-TRIO" evidence="3">
    <location>
        <begin position="1580"/>
        <end position="1738"/>
    </location>
</feature>
<feature type="region of interest" description="Lipid binding">
    <location>
        <begin position="1580"/>
        <end position="1837"/>
    </location>
</feature>
<feature type="region of interest" description="Disordered" evidence="5">
    <location>
        <begin position="2787"/>
        <end position="2839"/>
    </location>
</feature>
<feature type="short sequence motif" description="Bipartite nuclear localization signal">
    <location>
        <begin position="2555"/>
        <end position="2571"/>
    </location>
</feature>
<feature type="compositionally biased region" description="Polar residues" evidence="5">
    <location>
        <begin position="2801"/>
        <end position="2827"/>
    </location>
</feature>
<feature type="site" description="Arginine finger; crucial for GTP hydrolysis by stabilizing the transition state" evidence="4">
    <location>
        <position position="1276"/>
    </location>
</feature>
<feature type="modified residue" description="N-acetylalanine" evidence="1">
    <location>
        <position position="2"/>
    </location>
</feature>
<feature type="modified residue" description="Phosphoserine" evidence="69 70 71 73">
    <location>
        <position position="864"/>
    </location>
</feature>
<feature type="modified residue" description="Phosphoserine" evidence="70 73">
    <location>
        <position position="876"/>
    </location>
</feature>
<feature type="modified residue" description="Phosphoserine" evidence="69 73">
    <location>
        <position position="2188"/>
    </location>
</feature>
<feature type="modified residue" description="Phosphoserine" evidence="2">
    <location>
        <position position="2467"/>
    </location>
</feature>
<feature type="modified residue" description="Phosphothreonine" evidence="2">
    <location>
        <position position="2514"/>
    </location>
</feature>
<feature type="modified residue" description="Phosphoserine" evidence="69 70 73">
    <location>
        <position position="2515"/>
    </location>
</feature>
<feature type="modified residue" description="Phosphoserine" evidence="69 73">
    <location>
        <position position="2521"/>
    </location>
</feature>
<feature type="modified residue" description="Phosphoserine" evidence="73">
    <location>
        <position position="2523"/>
    </location>
</feature>
<feature type="modified residue" description="Phosphoserine" evidence="69 72 73 74">
    <location>
        <position position="2543"/>
    </location>
</feature>
<feature type="modified residue" description="Phosphothreonine" evidence="73">
    <location>
        <position position="2565"/>
    </location>
</feature>
<feature type="modified residue" description="Phosphoserine" evidence="73">
    <location>
        <position position="2597"/>
    </location>
</feature>
<feature type="modified residue" description="Phosphoserine" evidence="73">
    <location>
        <position position="2802"/>
    </location>
</feature>
<feature type="modified residue" description="Phosphoserine" evidence="71 72 74">
    <location>
        <position position="2817"/>
    </location>
</feature>
<feature type="splice variant" id="VSP_001629" description="In isoform 3." evidence="58">
    <original>ALLV</original>
    <variation>VRGK</variation>
    <location>
        <begin position="548"/>
        <end position="551"/>
    </location>
</feature>
<feature type="splice variant" id="VSP_001630" description="In isoform 3." evidence="58">
    <location>
        <begin position="552"/>
        <end position="2839"/>
    </location>
</feature>
<feature type="splice variant" id="VSP_043467" description="In isoform 5." evidence="66">
    <original>SSQMLFYICKKLTSHQMLSS</original>
    <variation>RYMYFYFLNSTFKFYFVFLS</variation>
    <location>
        <begin position="574"/>
        <end position="593"/>
    </location>
</feature>
<feature type="splice variant" id="VSP_043468" description="In isoform 5." evidence="66">
    <location>
        <begin position="594"/>
        <end position="2839"/>
    </location>
</feature>
<feature type="splice variant" id="VSP_001628" description="In isoform I and isoform 6." evidence="59 60 61 62 63 65">
    <location>
        <begin position="1371"/>
        <end position="1391"/>
    </location>
</feature>
<feature type="splice variant" id="VSP_001631" description="In isoform 4." evidence="64">
    <original>SIFYQAGT</original>
    <variation>TPPPEPET</variation>
    <location>
        <begin position="1591"/>
        <end position="1598"/>
    </location>
</feature>
<feature type="splice variant" id="VSP_001632" description="In isoform 4." evidence="64">
    <location>
        <begin position="1599"/>
        <end position="2839"/>
    </location>
</feature>
<feature type="splice variant" id="VSP_053587" description="In isoform 6." evidence="63">
    <original>P</original>
    <variation>PASLPCSNSAVFMQLFPHQ</variation>
    <location>
        <position position="2792"/>
    </location>
</feature>
<feature type="sequence variant" id="VAR_032459" description="In NF1; dbSNP:rs199474725." evidence="22">
    <original>H</original>
    <variation>R</variation>
    <location>
        <position position="31"/>
    </location>
</feature>
<feature type="sequence variant" id="VAR_017550" description="In mismatch repair deficient cancer cells; dbSNP:rs199474726." evidence="16">
    <original>A</original>
    <variation>D</variation>
    <location>
        <position position="74"/>
    </location>
</feature>
<feature type="sequence variant" id="VAR_022254" description="In dbSNP:rs4795581." evidence="57">
    <original>Y</original>
    <variation>C</variation>
    <location>
        <position position="80"/>
    </location>
</feature>
<feature type="sequence variant" id="VAR_049135" description="In dbSNP:rs4795581.">
    <original>Y</original>
    <variation>S</variation>
    <location>
        <position position="80"/>
    </location>
</feature>
<feature type="sequence variant" id="VAR_021730" description="In NF1; dbSNP:rs199474729." evidence="15">
    <original>S</original>
    <variation>F</variation>
    <location>
        <position position="82"/>
    </location>
</feature>
<feature type="sequence variant" id="VAR_071668" description="In NF1; dbSNP:rs1597629882." evidence="40">
    <original>C</original>
    <variation>W</variation>
    <location>
        <position position="93"/>
    </location>
</feature>
<feature type="sequence variant" id="VAR_017551" description="In NF1; dbSNP:rs199474728." evidence="16">
    <original>C</original>
    <variation>Y</variation>
    <location>
        <position position="93"/>
    </location>
</feature>
<feature type="sequence variant" id="VAR_010989" description="In NF1; dbSNP:rs199474731." evidence="8">
    <original>I</original>
    <variation>S</variation>
    <location>
        <position position="117"/>
    </location>
</feature>
<feature type="sequence variant" id="VAR_032460" description="In NF1; dbSNP:rs199474734." evidence="22">
    <original>L</original>
    <variation>P</variation>
    <location>
        <position position="145"/>
    </location>
</feature>
<feature type="sequence variant" id="VAR_021731" description="In NF1; dbSNP:rs199474744." evidence="23">
    <original>I</original>
    <variation>N</variation>
    <location>
        <position position="157"/>
    </location>
</feature>
<feature type="sequence variant" id="VAR_065888" description="In NF1; dbSNP:rs199474752." evidence="37">
    <original>R</original>
    <variation>T</variation>
    <location>
        <position position="160"/>
    </location>
</feature>
<feature type="sequence variant" id="VAR_017552" description="Found in mismatch repair deficient cancer cells; also found in a cutaneous neurofibroma from a patient with neurofibromatosis; somatic mutation; dbSNP:rs112306990." evidence="9 16 22 23 38">
    <original>D</original>
    <variation>E</variation>
    <location>
        <position position="176"/>
    </location>
</feature>
<feature type="sequence variant" id="VAR_032461" description="In NF1; reduced splicing enhancement; dbSNP:rs1567820771." evidence="25">
    <original>D</original>
    <variation>V</variation>
    <location>
        <position position="186"/>
    </location>
</feature>
<feature type="sequence variant" id="VAR_032462" description="In NFNS; dbSNP:rs199474753." evidence="28">
    <original>L</original>
    <variation>R</variation>
    <location>
        <position position="194"/>
    </location>
</feature>
<feature type="sequence variant" id="VAR_021732" description="In NF1; dbSNP:rs199474756." evidence="9">
    <original>L</original>
    <variation>P</variation>
    <location>
        <position position="216"/>
    </location>
</feature>
<feature type="sequence variant" id="VAR_032463" description="In NF1; dbSNP:rs199474735." evidence="22">
    <original>C</original>
    <variation>R</variation>
    <location>
        <position position="324"/>
    </location>
</feature>
<feature type="sequence variant" id="VAR_067201" description="In a cutaneous neurofibroma from a patient with neurofibromatosis; somatic mutation; dbSNP:rs199474767." evidence="38">
    <original>A</original>
    <variation>T</variation>
    <location>
        <position position="330"/>
    </location>
</feature>
<feature type="sequence variant" id="VAR_032464" description="In NF1; dbSNP:rs199474736." evidence="22">
    <original>E</original>
    <variation>V</variation>
    <location>
        <position position="337"/>
    </location>
</feature>
<feature type="sequence variant" id="VAR_010990" description="In NF1; dbSNP:rs199474773." evidence="55">
    <original>D</original>
    <variation>G</variation>
    <location>
        <position position="338"/>
    </location>
</feature>
<feature type="sequence variant" id="VAR_021733" description="In NF1; dbSNP:rs137854563." evidence="9">
    <original>L</original>
    <variation>P</variation>
    <location>
        <position position="357"/>
    </location>
</feature>
<feature type="sequence variant" id="VAR_067202" description="In a cutaneous neurofibroma from a patient with neurofibromatosis; somatic mutation; dbSNP:rs199474768." evidence="38">
    <original>H</original>
    <variation>D</variation>
    <location>
        <position position="393"/>
    </location>
</feature>
<feature type="sequence variant" id="VAR_067203" description="In a cutaneous neurofibroma from a patient with neurofibromatosis; somatic mutation; dbSNP:rs199474769." evidence="38">
    <original>H</original>
    <variation>L</variation>
    <location>
        <position position="393"/>
    </location>
</feature>
<feature type="sequence variant" id="VAR_032465" description="In NF1; dbSNP:rs137854557." evidence="22">
    <original>Y</original>
    <variation>C</variation>
    <location>
        <position position="489"/>
    </location>
</feature>
<feature type="sequence variant" id="VAR_021734" description="In NF1; dbSNP:rs199474757." evidence="9">
    <original>Y</original>
    <variation>C</variation>
    <location>
        <position position="491"/>
    </location>
</feature>
<feature type="sequence variant" id="VAR_010991" description="In NF1; dbSNP:rs137854558." evidence="11">
    <original>L</original>
    <variation>P</variation>
    <location>
        <position position="508"/>
    </location>
</feature>
<feature type="sequence variant" id="VAR_067204" description="In a cutaneous neurofibroma from a patient with neurofibromatosis; somatic mutation; dbSNP:rs199474770." evidence="38">
    <original>Q</original>
    <variation>P</variation>
    <location>
        <position position="519"/>
    </location>
</feature>
<feature type="sequence variant" id="VAR_032466" description="In NF1; dbSNP:rs199474737." evidence="22">
    <original>L</original>
    <variation>P</variation>
    <location>
        <position position="532"/>
    </location>
</feature>
<feature type="sequence variant" id="VAR_021735" description="In NF1; dbSNP:rs199474758." evidence="9">
    <original>L</original>
    <variation>P</variation>
    <location>
        <position position="549"/>
    </location>
</feature>
<feature type="sequence variant" id="VAR_032467" description="In NF1; dbSNP:rs2144015494 and dbSNP:rs2066929440." evidence="22">
    <original>S</original>
    <variation>R</variation>
    <location>
        <position position="574"/>
    </location>
</feature>
<feature type="sequence variant" id="VAR_021736" description="In NF1; dbSNP:rs199474774." evidence="19">
    <original>L</original>
    <variation>R</variation>
    <location>
        <position position="578"/>
    </location>
</feature>
<feature type="sequence variant" id="VAR_021737" description="In NF1; dbSNP:rs199474759." evidence="9">
    <original>I</original>
    <variation>T</variation>
    <location>
        <position position="581"/>
    </location>
</feature>
<feature type="sequence variant" id="VAR_021738" description="In NF1; dbSNP:rs199474760." evidence="9">
    <original>K</original>
    <variation>R</variation>
    <location>
        <position position="583"/>
    </location>
</feature>
<feature type="sequence variant" id="VAR_017553" description="In NF1; dbSNP:rs142712751." evidence="16">
    <original>L</original>
    <variation>V</variation>
    <location>
        <position position="604"/>
    </location>
</feature>
<feature type="sequence variant" id="VAR_002653" description="In NF1; affects splicing by creating a novel splice acceptor site; dbSNP:rs199474738." evidence="22 23 51">
    <original>G</original>
    <variation>R</variation>
    <location>
        <position position="629"/>
    </location>
</feature>
<feature type="sequence variant" id="VAR_021739" description="In NF1; uncertain significance; dbSNP:rs145891889." evidence="9 22">
    <original>S</original>
    <variation>F</variation>
    <location>
        <position position="665"/>
    </location>
</feature>
<feature type="sequence variant" id="VAR_022255" description="In dbSNP:rs17881753." evidence="57">
    <original>P</original>
    <variation>L</variation>
    <location>
        <position position="678"/>
    </location>
</feature>
<feature type="sequence variant" id="VAR_021740" description="In NF1; dbSNP:rs199474761." evidence="9">
    <original>L</original>
    <variation>P</variation>
    <location>
        <position position="695"/>
    </location>
</feature>
<feature type="sequence variant" id="VAR_017554" description="In mismatch repair deficient cancer cells; dbSNP:rs199474727." evidence="16">
    <original>H</original>
    <variation>R</variation>
    <location>
        <position position="712"/>
    </location>
</feature>
<feature type="sequence variant" id="VAR_021741" description="In NF1; dbSNP:rs199474762." evidence="9">
    <original>L</original>
    <variation>P</variation>
    <location>
        <position position="763"/>
    </location>
</feature>
<feature type="sequence variant" id="VAR_021742" description="In NF1; uncertain significance; dbSNP:rs199474777." evidence="7">
    <original>R</original>
    <variation>H</variation>
    <location>
        <position position="765"/>
    </location>
</feature>
<feature type="sequence variant" id="VAR_067205" description="In a cutaneous neurofibroma from a patient with neurofibromatosis; somatic mutation; dbSNP:rs199474771." evidence="38">
    <original>A</original>
    <variation>T</variation>
    <location>
        <position position="776"/>
    </location>
</feature>
<feature type="sequence variant" id="VAR_021743" description="In NF1; dbSNP:rs199474745." evidence="9 23">
    <original>W</original>
    <variation>S</variation>
    <location>
        <position position="777"/>
    </location>
</feature>
<feature type="sequence variant" id="VAR_021744" description="In NF1; dbSNP:rs199474746." evidence="9 14 17 23">
    <original>T</original>
    <variation>K</variation>
    <location>
        <position position="780"/>
    </location>
</feature>
<feature type="sequence variant" id="VAR_021745" description="In NF1; dbSNP:rs199474763." evidence="9">
    <original>H</original>
    <variation>P</variation>
    <location>
        <position position="781"/>
    </location>
</feature>
<feature type="sequence variant" id="VAR_021746" description="In NF1; dbSNP:rs199474778." evidence="14">
    <original>W</original>
    <variation>C</variation>
    <location>
        <position position="784"/>
    </location>
</feature>
<feature type="sequence variant" id="VAR_021747" description="In NF1; dbSNP:rs199474730." evidence="15 23">
    <original>W</original>
    <variation>R</variation>
    <location>
        <position position="784"/>
    </location>
</feature>
<feature type="sequence variant" id="VAR_010992" description="In NF1; dbSNP:rs199474785." evidence="10 22">
    <original>L</original>
    <variation>F</variation>
    <location>
        <position position="844"/>
    </location>
</feature>
<feature type="sequence variant" id="VAR_032468" description="In NF1; dbSNP:rs137854566." evidence="22">
    <original>L</original>
    <variation>P</variation>
    <location>
        <position position="844"/>
    </location>
</feature>
<feature type="sequence variant" id="VAR_002654" description="In NF1; sporadic; dbSNP:rs137854566." evidence="16 27 54">
    <original>L</original>
    <variation>R</variation>
    <location>
        <position position="844"/>
    </location>
</feature>
<feature type="sequence variant" id="VAR_021748" description="In NF1; dbSNP:rs199474747." evidence="9 17 23">
    <original>L</original>
    <variation>P</variation>
    <location>
        <position position="847"/>
    </location>
</feature>
<feature type="sequence variant" id="VAR_021749" description="In NF1; dbSNP:rs199474748." evidence="17 23">
    <original>G</original>
    <variation>E</variation>
    <location>
        <position position="848"/>
    </location>
</feature>
<feature type="sequence variant" id="VAR_032469" description="In dbSNP:rs199474739." evidence="22">
    <original>R</original>
    <variation>C</variation>
    <location>
        <position position="873"/>
    </location>
</feature>
<feature type="sequence variant" id="VAR_002655" description="In NF1; sporadic; dbSNP:rs199474786." evidence="16 54">
    <original>L</original>
    <variation>P</variation>
    <location>
        <position position="898"/>
    </location>
</feature>
<feature type="sequence variant" id="VAR_021750" description="In NF1; patient with cafe-au-lait spots; may be a distinct form of NF1; dbSNP:rs199474775." evidence="19">
    <original>L</original>
    <variation>P</variation>
    <location>
        <position position="920"/>
    </location>
</feature>
<feature type="sequence variant" id="VAR_021751" description="In NF1; dbSNP:rs199474749." evidence="17 23">
    <original>M</original>
    <variation>R</variation>
    <location>
        <position position="968"/>
    </location>
</feature>
<feature type="sequence variant" id="VAR_002656" description="In NF1; most patients carrying the mutation do not manifest cutaneous neurofibromas." evidence="22 31 43">
    <location>
        <position position="991"/>
    </location>
</feature>
<feature type="sequence variant" id="VAR_002657" description="In NF1; dbSNP:rs137854553." evidence="50">
    <original>M</original>
    <variation>R</variation>
    <location>
        <position position="1035"/>
    </location>
</feature>
<feature type="sequence variant" id="VAR_071669" description="In NF1; dbSNP:rs1555614634." evidence="40">
    <original>W</original>
    <variation>R</variation>
    <location>
        <position position="1048"/>
    </location>
</feature>
<feature type="sequence variant" id="VAR_032470" description="In NF1; dbSNP:rs199474740." evidence="22">
    <original>M</original>
    <variation>V</variation>
    <location>
        <position position="1073"/>
    </location>
</feature>
<feature type="sequence variant" id="VAR_021752" description="In NF1; dbSNP:rs199474779." evidence="14">
    <original>L</original>
    <variation>P</variation>
    <location>
        <position position="1147"/>
    </location>
</feature>
<feature type="sequence variant" id="VAR_021753" description="In NF1; dbSNP:rs199474764." evidence="9">
    <original>N</original>
    <variation>S</variation>
    <location>
        <position position="1156"/>
    </location>
</feature>
<feature type="sequence variant" id="VAR_010993" description="In NF1; dbSNP:rs199474787." evidence="44">
    <original>G</original>
    <variation>D</variation>
    <location>
        <position position="1166"/>
    </location>
</feature>
<feature type="sequence variant" id="VAR_035543" description="In a colorectal cancer sample; somatic mutation; dbSNP:rs2067142260." evidence="30">
    <original>L</original>
    <variation>I</variation>
    <location>
        <position position="1187"/>
    </location>
</feature>
<feature type="sequence variant" id="VAR_071670" description="In NF1; dbSNP:rs752039618." evidence="40">
    <original>Q</original>
    <variation>R</variation>
    <location>
        <position position="1189"/>
    </location>
</feature>
<feature type="sequence variant" id="VAR_021754" description="In NF1; dbSNP:rs199474780." evidence="14">
    <original>F</original>
    <variation>C</variation>
    <location>
        <position position="1193"/>
    </location>
</feature>
<feature type="sequence variant" id="VAR_032471" description="In NF1; dbSNP:rs199474741." evidence="22">
    <original>L</original>
    <variation>R</variation>
    <location>
        <position position="1196"/>
    </location>
</feature>
<feature type="sequence variant" id="VAR_021755" description="In NF1; dbSNP:rs199474732." evidence="7">
    <original>R</original>
    <variation>G</variation>
    <location>
        <position position="1204"/>
    </location>
</feature>
<feature type="sequence variant" id="VAR_010994" description="In NF1; dbSNP:rs199474732." evidence="8">
    <original>R</original>
    <variation>W</variation>
    <location>
        <position position="1204"/>
    </location>
</feature>
<feature type="sequence variant" id="VAR_032472" description="In NF1; with neurofibromatous neuropathy; dbSNP:rs137854564." evidence="24">
    <original>L</original>
    <variation>P</variation>
    <location>
        <position position="1243"/>
    </location>
</feature>
<feature type="sequence variant" id="VAR_021756" description="In NF1; dbSNP:rs199474765." evidence="9">
    <original>R</original>
    <variation>P</variation>
    <location>
        <position position="1250"/>
    </location>
</feature>
<feature type="sequence variant" id="VAR_032473" description="In NF1; dbSNP:rs199474742." evidence="22">
    <original>R</original>
    <variation>G</variation>
    <location>
        <position position="1276"/>
    </location>
</feature>
<feature type="sequence variant" id="VAR_010995" description="In NF1; complete loss of GAP activity; dbSNP:rs137854556." evidence="9 56">
    <original>R</original>
    <variation>P</variation>
    <location>
        <position position="1276"/>
    </location>
</feature>
<feature type="sequence variant" id="VAR_017555" description="In NF1 and mismatch repair deficient cancer cells; dbSNP:rs137854556." evidence="9 16 22">
    <original>R</original>
    <variation>Q</variation>
    <location>
        <position position="1276"/>
    </location>
</feature>
<feature type="sequence variant" id="VAR_065236" description="In NFNS; dbSNP:rs199474789." evidence="33">
    <original>L</original>
    <variation>F</variation>
    <location>
        <position position="1411"/>
    </location>
</feature>
<feature type="sequence variant" id="VAR_010996" description="In NF1; significant reduction of GAP activity; dbSNP:rs137854554." evidence="52">
    <original>R</original>
    <variation>S</variation>
    <location>
        <position position="1412"/>
    </location>
</feature>
<feature type="sequence variant" id="VAR_022256" description="In dbSNP:rs17884349." evidence="57">
    <original>Y</original>
    <variation>H</variation>
    <location>
        <position position="1422"/>
    </location>
</feature>
<feature type="sequence variant" id="VAR_032474" description="In NF1." evidence="22">
    <original>K</original>
    <variation>E</variation>
    <location>
        <position position="1430"/>
    </location>
</feature>
<feature type="sequence variant" id="VAR_010997" description="In NF1; dbSNP:rs199474790." evidence="52">
    <original>K</original>
    <variation>Q</variation>
    <location>
        <position position="1440"/>
    </location>
</feature>
<feature type="sequence variant" id="VAR_002658" description="In NF1; dbSNP:rs199474788." evidence="44">
    <original>K</original>
    <variation>R</variation>
    <location>
        <position position="1440"/>
    </location>
</feature>
<feature type="sequence variant" id="VAR_002659" description="In NF1 and NFNS; significant reduction of intrinsic GAP activity; dbSNP:rs137854550." evidence="15 26 28 52">
    <original>K</original>
    <variation>E</variation>
    <location>
        <position position="1444"/>
    </location>
</feature>
<feature type="sequence variant" id="VAR_021757" description="In NF1; dbSNP:rs199474750." evidence="17 23">
    <original>K</original>
    <variation>N</variation>
    <location>
        <position position="1444"/>
    </location>
</feature>
<feature type="sequence variant" id="VAR_021758" description="In NF1; dbSNP:rs199474781." evidence="14">
    <original>K</original>
    <variation>R</variation>
    <location>
        <position position="1444"/>
    </location>
</feature>
<feature type="sequence variant" id="VAR_008129" description="In NF1; dbSNP:rs199474733." evidence="6 8 9">
    <original>L</original>
    <variation>P</variation>
    <location>
        <position position="1446"/>
    </location>
</feature>
<feature type="sequence variant" id="VAR_032475" description="In NFNS; dbSNP:rs199474754." evidence="28">
    <original>N</original>
    <variation>T</variation>
    <location>
        <position position="1451"/>
    </location>
</feature>
<feature type="sequence variant" id="VAR_032476" description="In NFNS; dbSNP:rs199474755." evidence="28">
    <original>V</original>
    <variation>L</variation>
    <location>
        <position position="1453"/>
    </location>
</feature>
<feature type="sequence variant" id="VAR_032477" description="In NFNS; dbSNP:rs267606607." evidence="18 22 28">
    <location>
        <position position="1459"/>
    </location>
</feature>
<feature type="sequence variant" id="VAR_067206" description="In a cutaneous neurofibroma from a patient with neurofibromatosis; somatic mutation; dbSNP:rs199474772." evidence="38">
    <original>S</original>
    <variation>F</variation>
    <location>
        <position position="1484"/>
    </location>
</feature>
<feature type="sequence variant" id="VAR_010998" description="In NF1; dbSNP:rs199474743." evidence="22 52">
    <original>S</original>
    <variation>G</variation>
    <location>
        <position position="1489"/>
    </location>
</feature>
<feature type="sequence variant" id="VAR_021759" description="In NF1; reduces protein stability; dbSNP:rs199474766." evidence="9 34">
    <original>I</original>
    <variation>V</variation>
    <location>
        <position position="1605"/>
    </location>
</feature>
<feature type="sequence variant" id="VAR_002660" description="In NF1; dbSNP:rs1060500316." evidence="55">
    <original>R</original>
    <variation>W</variation>
    <location>
        <position position="1611"/>
    </location>
</feature>
<feature type="sequence variant" id="VAR_002661" description="In NF1." evidence="46">
    <original>L</original>
    <variation>LGHEQQKLPAATLAL</variation>
    <location>
        <position position="1733"/>
    </location>
</feature>
<feature type="sequence variant" id="VAR_021760" description="In NF1; dbSNP:rs199474782." evidence="14">
    <original>A</original>
    <variation>S</variation>
    <location>
        <position position="1785"/>
    </location>
</feature>
<feature type="sequence variant" id="VAR_035544" description="In a colorectal cancer sample; somatic mutation; dbSNP:rs2151550343." evidence="30">
    <original>P</original>
    <variation>L</variation>
    <location>
        <position position="1951"/>
    </location>
</feature>
<feature type="sequence variant" id="VAR_002662" description="In NF1; dbSNP:rs199474791." evidence="53">
    <original>W</original>
    <variation>R</variation>
    <location>
        <position position="1952"/>
    </location>
</feature>
<feature type="sequence variant" id="VAR_002663" description="In NF1; dbSNP:rs199474792." evidence="35">
    <original>L</original>
    <variation>P</variation>
    <location>
        <position position="1953"/>
    </location>
</feature>
<feature type="sequence variant" id="VAR_021761" description="In NF1." evidence="17 23">
    <location>
        <position position="1953"/>
    </location>
</feature>
<feature type="sequence variant" id="VAR_021762" description="In NF1; dbSNP:rs199474751." evidence="17 23">
    <original>G</original>
    <variation>R</variation>
    <location>
        <position position="2001"/>
    </location>
</feature>
<feature type="sequence variant" id="VAR_021763" description="In NF1; dbSNP:rs199474783." evidence="14">
    <original>D</original>
    <variation>N</variation>
    <location>
        <position position="2012"/>
    </location>
</feature>
<feature type="sequence variant" id="VAR_017669" description="In FSNF; no cafe-au-lait macules; null mutation; 50% reduction of protein level; dbSNP:rs137854561." evidence="12">
    <original>L</original>
    <variation>P</variation>
    <location>
        <position position="2088"/>
    </location>
</feature>
<feature type="sequence variant" id="VAR_071671" description="In NF1; dbSNP:rs1597843129." evidence="41">
    <original>L</original>
    <variation>P</variation>
    <location>
        <position position="2125"/>
    </location>
</feature>
<feature type="sequence variant" id="VAR_002664" description="In NF1; dbSNP:rs137854551." evidence="20">
    <original>L</original>
    <variation>M</variation>
    <location>
        <position position="2164"/>
    </location>
</feature>
<feature type="sequence variant" id="VAR_002665" description="In NF1; dbSNP:rs267606598." evidence="20">
    <original>Y</original>
    <variation>N</variation>
    <location>
        <position position="2192"/>
    </location>
</feature>
<feature type="sequence variant" id="VAR_021764" description="In NF1; dbSNP:rs199474776." evidence="19">
    <original>P</original>
    <variation>A</variation>
    <location>
        <position position="2221"/>
    </location>
</feature>
<feature type="sequence variant" id="VAR_021765" description="In NF1; dbSNP:rs199474784." evidence="14">
    <original>E</original>
    <variation>K</variation>
    <location>
        <position position="2357"/>
    </location>
</feature>
<feature type="sequence variant" id="VAR_002666" description="In NF1." evidence="8 45">
    <location>
        <begin position="2387"/>
        <end position="2388"/>
    </location>
</feature>
<feature type="sequence variant" id="VAR_021766" description="In NF1; dbSNP:rs149055633." evidence="9">
    <original>T</original>
    <variation>I</variation>
    <location>
        <position position="2507"/>
    </location>
</feature>
<feature type="sequence variant" id="VAR_022257" description="In dbSNP:rs2230850." evidence="57">
    <original>V</original>
    <variation>L</variation>
    <location>
        <position position="2511"/>
    </location>
</feature>
<feature type="sequence variant" id="VAR_002667" description="In NF1; dbSNP:rs199474793." evidence="48">
    <original>T</original>
    <variation>A</variation>
    <location>
        <position position="2631"/>
    </location>
</feature>
<feature type="sequence variant" id="VAR_035545" description="In a breast cancer sample; somatic mutation; dbSNP:rs2151587866." evidence="30">
    <original>G</original>
    <variation>R</variation>
    <location>
        <position position="2745"/>
    </location>
</feature>
<feature type="mutagenesis site" description="Reduces phospholipid binding; when associated with A-1695; A-1769 and A-1771." evidence="29">
    <original>K</original>
    <variation>A</variation>
    <location>
        <position position="1691"/>
    </location>
</feature>
<feature type="mutagenesis site" description="Reduces phospholipid binding; when associated with A-1691; A-1769 and A-1771." evidence="29">
    <original>R</original>
    <variation>A</variation>
    <location>
        <position position="1695"/>
    </location>
</feature>
<feature type="mutagenesis site" description="Reduces phospholipid binding; when associated with A-1691; A-1695 and A-1771." evidence="29">
    <original>R</original>
    <variation>A</variation>
    <location>
        <position position="1769"/>
    </location>
</feature>
<feature type="mutagenesis site" description="Reduces phospholipid binding; when associated with A-1691; A-169 and A-1769." evidence="29 34">
    <original>K</original>
    <variation>A</variation>
    <location>
        <position position="1771"/>
    </location>
</feature>
<feature type="mutagenesis site" description="Reduces protein stability." evidence="29 34">
    <location>
        <position position="1771"/>
    </location>
</feature>
<feature type="sequence conflict" description="In Ref. 11; AAA74897/AAB59558." evidence="67" ref="11">
    <original>M</original>
    <variation>I</variation>
    <location>
        <position position="496"/>
    </location>
</feature>
<feature type="sequence conflict" description="In Ref. 14; AAA59923." evidence="67" ref="14">
    <original>EL</original>
    <variation>ST</variation>
    <location>
        <begin position="1094"/>
        <end position="1095"/>
    </location>
</feature>
<feature type="sequence conflict" description="In Ref. 11; AAA74897/AAB59558." evidence="67" ref="11">
    <original>H</original>
    <variation>HH</variation>
    <location>
        <position position="1576"/>
    </location>
</feature>
<feature type="helix" evidence="82">
    <location>
        <begin position="5"/>
        <end position="18"/>
    </location>
</feature>
<feature type="turn" evidence="82">
    <location>
        <begin position="31"/>
        <end position="33"/>
    </location>
</feature>
<feature type="helix" evidence="82">
    <location>
        <begin position="34"/>
        <end position="46"/>
    </location>
</feature>
<feature type="turn" evidence="82">
    <location>
        <begin position="47"/>
        <end position="49"/>
    </location>
</feature>
<feature type="helix" evidence="82">
    <location>
        <begin position="51"/>
        <end position="66"/>
    </location>
</feature>
<feature type="helix" evidence="82">
    <location>
        <begin position="73"/>
        <end position="96"/>
    </location>
</feature>
<feature type="helix" evidence="82">
    <location>
        <begin position="106"/>
        <end position="111"/>
    </location>
</feature>
<feature type="helix" evidence="82">
    <location>
        <begin position="114"/>
        <end position="121"/>
    </location>
</feature>
<feature type="helix" evidence="82">
    <location>
        <begin position="130"/>
        <end position="146"/>
    </location>
</feature>
<feature type="helix" evidence="82">
    <location>
        <begin position="150"/>
        <end position="166"/>
    </location>
</feature>
<feature type="helix" evidence="82">
    <location>
        <begin position="174"/>
        <end position="181"/>
    </location>
</feature>
<feature type="helix" evidence="82">
    <location>
        <begin position="187"/>
        <end position="201"/>
    </location>
</feature>
<feature type="helix" evidence="82">
    <location>
        <begin position="206"/>
        <end position="226"/>
    </location>
</feature>
<feature type="helix" evidence="82">
    <location>
        <begin position="228"/>
        <end position="236"/>
    </location>
</feature>
<feature type="helix" evidence="82">
    <location>
        <begin position="240"/>
        <end position="256"/>
    </location>
</feature>
<feature type="helix" evidence="82">
    <location>
        <begin position="260"/>
        <end position="276"/>
    </location>
</feature>
<feature type="helix" evidence="82">
    <location>
        <begin position="278"/>
        <end position="285"/>
    </location>
</feature>
<feature type="helix" evidence="82">
    <location>
        <begin position="294"/>
        <end position="307"/>
    </location>
</feature>
<feature type="helix" evidence="82">
    <location>
        <begin position="314"/>
        <end position="331"/>
    </location>
</feature>
<feature type="strand" evidence="82">
    <location>
        <begin position="336"/>
        <end position="338"/>
    </location>
</feature>
<feature type="helix" evidence="82">
    <location>
        <begin position="341"/>
        <end position="357"/>
    </location>
</feature>
<feature type="strand" evidence="82">
    <location>
        <begin position="360"/>
        <end position="362"/>
    </location>
</feature>
<feature type="strand" evidence="82">
    <location>
        <begin position="367"/>
        <end position="371"/>
    </location>
</feature>
<feature type="helix" evidence="82">
    <location>
        <begin position="373"/>
        <end position="386"/>
    </location>
</feature>
<feature type="strand" evidence="84">
    <location>
        <begin position="387"/>
        <end position="389"/>
    </location>
</feature>
<feature type="helix" evidence="82">
    <location>
        <begin position="394"/>
        <end position="398"/>
    </location>
</feature>
<feature type="strand" evidence="84">
    <location>
        <begin position="399"/>
        <end position="402"/>
    </location>
</feature>
<feature type="helix" evidence="82">
    <location>
        <begin position="404"/>
        <end position="419"/>
    </location>
</feature>
<feature type="strand" evidence="84">
    <location>
        <begin position="424"/>
        <end position="426"/>
    </location>
</feature>
<feature type="helix" evidence="82">
    <location>
        <begin position="429"/>
        <end position="435"/>
    </location>
</feature>
<feature type="helix" evidence="82">
    <location>
        <begin position="436"/>
        <end position="454"/>
    </location>
</feature>
<feature type="helix" evidence="82">
    <location>
        <begin position="483"/>
        <end position="502"/>
    </location>
</feature>
<feature type="helix" evidence="82">
    <location>
        <begin position="505"/>
        <end position="508"/>
    </location>
</feature>
<feature type="strand" evidence="82">
    <location>
        <begin position="516"/>
        <end position="518"/>
    </location>
</feature>
<feature type="helix" evidence="82">
    <location>
        <begin position="522"/>
        <end position="530"/>
    </location>
</feature>
<feature type="turn" evidence="82">
    <location>
        <begin position="531"/>
        <end position="534"/>
    </location>
</feature>
<feature type="helix" evidence="82">
    <location>
        <begin position="539"/>
        <end position="551"/>
    </location>
</feature>
<feature type="helix" evidence="82">
    <location>
        <begin position="555"/>
        <end position="558"/>
    </location>
</feature>
<feature type="helix" evidence="82">
    <location>
        <begin position="559"/>
        <end position="561"/>
    </location>
</feature>
<feature type="turn" evidence="82">
    <location>
        <begin position="566"/>
        <end position="568"/>
    </location>
</feature>
<feature type="helix" evidence="82">
    <location>
        <begin position="569"/>
        <end position="587"/>
    </location>
</feature>
<feature type="helix" evidence="82">
    <location>
        <begin position="593"/>
        <end position="617"/>
    </location>
</feature>
<feature type="helix" evidence="82">
    <location>
        <begin position="678"/>
        <end position="691"/>
    </location>
</feature>
<feature type="turn" evidence="82">
    <location>
        <begin position="693"/>
        <end position="696"/>
    </location>
</feature>
<feature type="helix" evidence="82">
    <location>
        <begin position="700"/>
        <end position="708"/>
    </location>
</feature>
<feature type="helix" evidence="82">
    <location>
        <begin position="711"/>
        <end position="720"/>
    </location>
</feature>
<feature type="helix" evidence="82">
    <location>
        <begin position="724"/>
        <end position="727"/>
    </location>
</feature>
<feature type="turn" evidence="82">
    <location>
        <begin position="728"/>
        <end position="730"/>
    </location>
</feature>
<feature type="helix" evidence="82">
    <location>
        <begin position="735"/>
        <end position="745"/>
    </location>
</feature>
<feature type="helix" evidence="82">
    <location>
        <begin position="752"/>
        <end position="762"/>
    </location>
</feature>
<feature type="helix" evidence="82">
    <location>
        <begin position="763"/>
        <end position="765"/>
    </location>
</feature>
<feature type="helix" evidence="82">
    <location>
        <begin position="771"/>
        <end position="793"/>
    </location>
</feature>
<feature type="helix" evidence="82">
    <location>
        <begin position="832"/>
        <end position="846"/>
    </location>
</feature>
<feature type="helix" evidence="82">
    <location>
        <begin position="849"/>
        <end position="851"/>
    </location>
</feature>
<feature type="helix" evidence="82">
    <location>
        <begin position="890"/>
        <end position="899"/>
    </location>
</feature>
<feature type="turn" evidence="82">
    <location>
        <begin position="900"/>
        <end position="903"/>
    </location>
</feature>
<feature type="turn" evidence="82">
    <location>
        <begin position="907"/>
        <end position="909"/>
    </location>
</feature>
<feature type="helix" evidence="82">
    <location>
        <begin position="910"/>
        <end position="923"/>
    </location>
</feature>
<feature type="helix" evidence="84">
    <location>
        <begin position="927"/>
        <end position="929"/>
    </location>
</feature>
<feature type="helix" evidence="82">
    <location>
        <begin position="930"/>
        <end position="942"/>
    </location>
</feature>
<feature type="turn" evidence="84">
    <location>
        <begin position="947"/>
        <end position="949"/>
    </location>
</feature>
<feature type="helix" evidence="82">
    <location>
        <begin position="955"/>
        <end position="973"/>
    </location>
</feature>
<feature type="helix" evidence="82">
    <location>
        <begin position="979"/>
        <end position="983"/>
    </location>
</feature>
<feature type="helix" evidence="82">
    <location>
        <begin position="989"/>
        <end position="1000"/>
    </location>
</feature>
<feature type="helix" evidence="82">
    <location>
        <begin position="1006"/>
        <end position="1021"/>
    </location>
</feature>
<feature type="turn" evidence="82">
    <location>
        <begin position="1026"/>
        <end position="1028"/>
    </location>
</feature>
<feature type="helix" evidence="82">
    <location>
        <begin position="1034"/>
        <end position="1046"/>
    </location>
</feature>
<feature type="helix" evidence="82">
    <location>
        <begin position="1053"/>
        <end position="1056"/>
    </location>
</feature>
<feature type="helix" evidence="82">
    <location>
        <begin position="1060"/>
        <end position="1063"/>
    </location>
</feature>
<feature type="helix" evidence="82">
    <location>
        <begin position="1064"/>
        <end position="1080"/>
    </location>
</feature>
<feature type="strand" evidence="84">
    <location>
        <begin position="1091"/>
        <end position="1093"/>
    </location>
</feature>
<feature type="helix" evidence="82">
    <location>
        <begin position="1095"/>
        <end position="1116"/>
    </location>
</feature>
<feature type="helix" evidence="82">
    <location>
        <begin position="1135"/>
        <end position="1155"/>
    </location>
</feature>
<feature type="helix" evidence="82">
    <location>
        <begin position="1157"/>
        <end position="1160"/>
    </location>
</feature>
<feature type="helix" evidence="82">
    <location>
        <begin position="1162"/>
        <end position="1167"/>
    </location>
</feature>
<feature type="helix" evidence="82">
    <location>
        <begin position="1173"/>
        <end position="1190"/>
    </location>
</feature>
<feature type="helix" evidence="84">
    <location>
        <begin position="1197"/>
        <end position="1200"/>
    </location>
</feature>
<feature type="turn" evidence="84">
    <location>
        <begin position="1201"/>
        <end position="1204"/>
    </location>
</feature>
<feature type="helix" evidence="75">
    <location>
        <begin position="1208"/>
        <end position="1216"/>
    </location>
</feature>
<feature type="turn" evidence="84">
    <location>
        <begin position="1217"/>
        <end position="1219"/>
    </location>
</feature>
<feature type="helix" evidence="79">
    <location>
        <begin position="1220"/>
        <end position="1228"/>
    </location>
</feature>
<feature type="helix" evidence="79">
    <location>
        <begin position="1233"/>
        <end position="1235"/>
    </location>
</feature>
<feature type="helix" evidence="79">
    <location>
        <begin position="1236"/>
        <end position="1249"/>
    </location>
</feature>
<feature type="helix" evidence="79">
    <location>
        <begin position="1253"/>
        <end position="1267"/>
    </location>
</feature>
<feature type="helix" evidence="79">
    <location>
        <begin position="1271"/>
        <end position="1273"/>
    </location>
</feature>
<feature type="strand" evidence="84">
    <location>
        <begin position="1277"/>
        <end position="1279"/>
    </location>
</feature>
<feature type="helix" evidence="79">
    <location>
        <begin position="1280"/>
        <end position="1309"/>
    </location>
</feature>
<feature type="turn" evidence="81">
    <location>
        <begin position="1310"/>
        <end position="1312"/>
    </location>
</feature>
<feature type="helix" evidence="79">
    <location>
        <begin position="1315"/>
        <end position="1317"/>
    </location>
</feature>
<feature type="helix" evidence="79">
    <location>
        <begin position="1323"/>
        <end position="1325"/>
    </location>
</feature>
<feature type="strand" evidence="80">
    <location>
        <begin position="1328"/>
        <end position="1330"/>
    </location>
</feature>
<feature type="helix" evidence="79">
    <location>
        <begin position="1332"/>
        <end position="1351"/>
    </location>
</feature>
<feature type="helix" evidence="79">
    <location>
        <begin position="1354"/>
        <end position="1356"/>
    </location>
</feature>
<feature type="helix" evidence="79">
    <location>
        <begin position="1359"/>
        <end position="1370"/>
    </location>
</feature>
<feature type="helix" evidence="79">
    <location>
        <begin position="1392"/>
        <end position="1394"/>
    </location>
</feature>
<feature type="helix" evidence="79">
    <location>
        <begin position="1398"/>
        <end position="1400"/>
    </location>
</feature>
<feature type="helix" evidence="79">
    <location>
        <begin position="1401"/>
        <end position="1411"/>
    </location>
</feature>
<feature type="helix" evidence="79">
    <location>
        <begin position="1414"/>
        <end position="1419"/>
    </location>
</feature>
<feature type="turn" evidence="79">
    <location>
        <begin position="1421"/>
        <end position="1425"/>
    </location>
</feature>
<feature type="strand" evidence="81">
    <location>
        <begin position="1426"/>
        <end position="1429"/>
    </location>
</feature>
<feature type="helix" evidence="79">
    <location>
        <begin position="1433"/>
        <end position="1451"/>
    </location>
</feature>
<feature type="helix" evidence="79">
    <location>
        <begin position="1459"/>
        <end position="1464"/>
    </location>
</feature>
<feature type="helix" evidence="79">
    <location>
        <begin position="1465"/>
        <end position="1483"/>
    </location>
</feature>
<feature type="strand" evidence="84">
    <location>
        <begin position="1490"/>
        <end position="1492"/>
    </location>
</feature>
<feature type="helix" evidence="75">
    <location>
        <begin position="1510"/>
        <end position="1514"/>
    </location>
</feature>
<feature type="helix" evidence="75">
    <location>
        <begin position="1517"/>
        <end position="1520"/>
    </location>
</feature>
<feature type="helix" evidence="83">
    <location>
        <begin position="1531"/>
        <end position="1533"/>
    </location>
</feature>
<feature type="helix" evidence="75">
    <location>
        <begin position="1535"/>
        <end position="1544"/>
    </location>
</feature>
<feature type="helix" evidence="77">
    <location>
        <begin position="1569"/>
        <end position="1578"/>
    </location>
</feature>
<feature type="turn" evidence="78">
    <location>
        <begin position="1582"/>
        <end position="1586"/>
    </location>
</feature>
<feature type="helix" evidence="78">
    <location>
        <begin position="1587"/>
        <end position="1590"/>
    </location>
</feature>
<feature type="strand" evidence="78">
    <location>
        <begin position="1592"/>
        <end position="1598"/>
    </location>
</feature>
<feature type="strand" evidence="78">
    <location>
        <begin position="1604"/>
        <end position="1609"/>
    </location>
</feature>
<feature type="helix" evidence="78">
    <location>
        <begin position="1610"/>
        <end position="1612"/>
    </location>
</feature>
<feature type="turn" evidence="76">
    <location>
        <begin position="1615"/>
        <end position="1617"/>
    </location>
</feature>
<feature type="helix" evidence="78">
    <location>
        <begin position="1620"/>
        <end position="1631"/>
    </location>
</feature>
<feature type="turn" evidence="78">
    <location>
        <begin position="1632"/>
        <end position="1636"/>
    </location>
</feature>
<feature type="strand" evidence="78">
    <location>
        <begin position="1639"/>
        <end position="1644"/>
    </location>
</feature>
<feature type="helix" evidence="78">
    <location>
        <begin position="1650"/>
        <end position="1652"/>
    </location>
</feature>
<feature type="helix" evidence="78">
    <location>
        <begin position="1656"/>
        <end position="1661"/>
    </location>
</feature>
<feature type="turn" evidence="78">
    <location>
        <begin position="1662"/>
        <end position="1664"/>
    </location>
</feature>
<feature type="helix" evidence="78">
    <location>
        <begin position="1668"/>
        <end position="1672"/>
    </location>
</feature>
<feature type="strand" evidence="78">
    <location>
        <begin position="1674"/>
        <end position="1681"/>
    </location>
</feature>
<feature type="helix" evidence="78">
    <location>
        <begin position="1684"/>
        <end position="1692"/>
    </location>
</feature>
<feature type="helix" evidence="78">
    <location>
        <begin position="1694"/>
        <end position="1697"/>
    </location>
</feature>
<feature type="turn" evidence="78">
    <location>
        <begin position="1698"/>
        <end position="1702"/>
    </location>
</feature>
<feature type="strand" evidence="78">
    <location>
        <begin position="1706"/>
        <end position="1711"/>
    </location>
</feature>
<feature type="helix" evidence="78">
    <location>
        <begin position="1714"/>
        <end position="1717"/>
    </location>
</feature>
<feature type="helix" evidence="78">
    <location>
        <begin position="1721"/>
        <end position="1723"/>
    </location>
</feature>
<feature type="helix" evidence="78">
    <location>
        <begin position="1728"/>
        <end position="1732"/>
    </location>
</feature>
<feature type="strand" evidence="78">
    <location>
        <begin position="1738"/>
        <end position="1749"/>
    </location>
</feature>
<feature type="strand" evidence="78">
    <location>
        <begin position="1751"/>
        <end position="1757"/>
    </location>
</feature>
<feature type="strand" evidence="78">
    <location>
        <begin position="1759"/>
        <end position="1767"/>
    </location>
</feature>
<feature type="strand" evidence="76">
    <location>
        <begin position="1770"/>
        <end position="1772"/>
    </location>
</feature>
<feature type="strand" evidence="78">
    <location>
        <begin position="1775"/>
        <end position="1777"/>
    </location>
</feature>
<feature type="strand" evidence="78">
    <location>
        <begin position="1780"/>
        <end position="1784"/>
    </location>
</feature>
<feature type="helix" evidence="78">
    <location>
        <begin position="1785"/>
        <end position="1787"/>
    </location>
</feature>
<feature type="strand" evidence="78">
    <location>
        <begin position="1788"/>
        <end position="1795"/>
    </location>
</feature>
<feature type="strand" evidence="78">
    <location>
        <begin position="1798"/>
        <end position="1803"/>
    </location>
</feature>
<feature type="strand" evidence="78">
    <location>
        <begin position="1810"/>
        <end position="1813"/>
    </location>
</feature>
<feature type="helix" evidence="78">
    <location>
        <begin position="1817"/>
        <end position="1833"/>
    </location>
</feature>
<feature type="helix" evidence="82">
    <location>
        <begin position="1847"/>
        <end position="1849"/>
    </location>
</feature>
<feature type="helix" evidence="82">
    <location>
        <begin position="1851"/>
        <end position="1861"/>
    </location>
</feature>
<feature type="helix" evidence="82">
    <location>
        <begin position="1867"/>
        <end position="1884"/>
    </location>
</feature>
<feature type="helix" evidence="82">
    <location>
        <begin position="1906"/>
        <end position="1918"/>
    </location>
</feature>
<feature type="helix" evidence="82">
    <location>
        <begin position="1920"/>
        <end position="1922"/>
    </location>
</feature>
<feature type="helix" evidence="82">
    <location>
        <begin position="1923"/>
        <end position="1936"/>
    </location>
</feature>
<feature type="helix" evidence="82">
    <location>
        <begin position="1939"/>
        <end position="1949"/>
    </location>
</feature>
<feature type="helix" evidence="82">
    <location>
        <begin position="1950"/>
        <end position="1952"/>
    </location>
</feature>
<feature type="helix" evidence="82">
    <location>
        <begin position="1957"/>
        <end position="1960"/>
    </location>
</feature>
<feature type="strand" evidence="82">
    <location>
        <begin position="1965"/>
        <end position="1967"/>
    </location>
</feature>
<feature type="helix" evidence="82">
    <location>
        <begin position="1968"/>
        <end position="1984"/>
    </location>
</feature>
<feature type="helix" evidence="82">
    <location>
        <begin position="1989"/>
        <end position="2000"/>
    </location>
</feature>
<feature type="helix" evidence="82">
    <location>
        <begin position="2004"/>
        <end position="2006"/>
    </location>
</feature>
<feature type="helix" evidence="82">
    <location>
        <begin position="2007"/>
        <end position="2021"/>
    </location>
</feature>
<feature type="helix" evidence="82">
    <location>
        <begin position="2026"/>
        <end position="2041"/>
    </location>
</feature>
<feature type="helix" evidence="82">
    <location>
        <begin position="2043"/>
        <end position="2057"/>
    </location>
</feature>
<feature type="helix" evidence="82">
    <location>
        <begin position="2058"/>
        <end position="2060"/>
    </location>
</feature>
<feature type="helix" evidence="82">
    <location>
        <begin position="2069"/>
        <end position="2071"/>
    </location>
</feature>
<feature type="helix" evidence="82">
    <location>
        <begin position="2075"/>
        <end position="2089"/>
    </location>
</feature>
<feature type="helix" evidence="82">
    <location>
        <begin position="2090"/>
        <end position="2092"/>
    </location>
</feature>
<feature type="helix" evidence="82">
    <location>
        <begin position="2096"/>
        <end position="2108"/>
    </location>
</feature>
<feature type="turn" evidence="82">
    <location>
        <begin position="2109"/>
        <end position="2112"/>
    </location>
</feature>
<feature type="helix" evidence="82">
    <location>
        <begin position="2116"/>
        <end position="2134"/>
    </location>
</feature>
<feature type="strand" evidence="82">
    <location>
        <begin position="2137"/>
        <end position="2139"/>
    </location>
</feature>
<feature type="helix" evidence="82">
    <location>
        <begin position="2143"/>
        <end position="2155"/>
    </location>
</feature>
<feature type="helix" evidence="82">
    <location>
        <begin position="2159"/>
        <end position="2165"/>
    </location>
</feature>
<feature type="helix" evidence="82">
    <location>
        <begin position="2173"/>
        <end position="2177"/>
    </location>
</feature>
<feature type="turn" evidence="82">
    <location>
        <begin position="2180"/>
        <end position="2184"/>
    </location>
</feature>
<feature type="helix" evidence="82">
    <location>
        <begin position="2199"/>
        <end position="2219"/>
    </location>
</feature>
<feature type="helix" evidence="82">
    <location>
        <begin position="2225"/>
        <end position="2237"/>
    </location>
</feature>
<feature type="turn" evidence="82">
    <location>
        <begin position="2242"/>
        <end position="2244"/>
    </location>
</feature>
<feature type="helix" evidence="82">
    <location>
        <begin position="2245"/>
        <end position="2250"/>
    </location>
</feature>
<feature type="helix" evidence="82">
    <location>
        <begin position="2252"/>
        <end position="2255"/>
    </location>
</feature>
<feature type="helix" evidence="82">
    <location>
        <begin position="2261"/>
        <end position="2280"/>
    </location>
</feature>
<feature type="turn" evidence="82">
    <location>
        <begin position="2285"/>
        <end position="2287"/>
    </location>
</feature>
<feature type="helix" evidence="82">
    <location>
        <begin position="2289"/>
        <end position="2301"/>
    </location>
</feature>
<feature type="helix" evidence="82">
    <location>
        <begin position="2302"/>
        <end position="2304"/>
    </location>
</feature>
<feature type="helix" evidence="82">
    <location>
        <begin position="2311"/>
        <end position="2314"/>
    </location>
</feature>
<feature type="helix" evidence="82">
    <location>
        <begin position="2317"/>
        <end position="2323"/>
    </location>
</feature>
<feature type="helix" evidence="82">
    <location>
        <begin position="2328"/>
        <end position="2347"/>
    </location>
</feature>
<feature type="strand" evidence="82">
    <location>
        <begin position="2351"/>
        <end position="2354"/>
    </location>
</feature>
<feature type="helix" evidence="82">
    <location>
        <begin position="2356"/>
        <end position="2363"/>
    </location>
</feature>
<feature type="helix" evidence="82">
    <location>
        <begin position="2365"/>
        <end position="2367"/>
    </location>
</feature>
<feature type="helix" evidence="82">
    <location>
        <begin position="2368"/>
        <end position="2378"/>
    </location>
</feature>
<feature type="turn" evidence="82">
    <location>
        <begin position="2382"/>
        <end position="2384"/>
    </location>
</feature>
<feature type="helix" evidence="82">
    <location>
        <begin position="2386"/>
        <end position="2392"/>
    </location>
</feature>
<feature type="turn" evidence="83">
    <location>
        <begin position="2393"/>
        <end position="2395"/>
    </location>
</feature>
<feature type="helix" evidence="82">
    <location>
        <begin position="2396"/>
        <end position="2399"/>
    </location>
</feature>
<feature type="helix" evidence="82">
    <location>
        <begin position="2403"/>
        <end position="2424"/>
    </location>
</feature>
<feature type="turn" evidence="82">
    <location>
        <begin position="2427"/>
        <end position="2429"/>
    </location>
</feature>
<feature type="helix" evidence="82">
    <location>
        <begin position="2434"/>
        <end position="2436"/>
    </location>
</feature>
<feature type="helix" evidence="82">
    <location>
        <begin position="2437"/>
        <end position="2441"/>
    </location>
</feature>
<feature type="turn" evidence="82">
    <location>
        <begin position="2443"/>
        <end position="2445"/>
    </location>
</feature>
<feature type="helix" evidence="82">
    <location>
        <begin position="2447"/>
        <end position="2452"/>
    </location>
</feature>
<feature type="turn" evidence="82">
    <location>
        <begin position="2607"/>
        <end position="2609"/>
    </location>
</feature>
<feature type="helix" evidence="82">
    <location>
        <begin position="2613"/>
        <end position="2629"/>
    </location>
</feature>
<feature type="helix" evidence="82">
    <location>
        <begin position="2633"/>
        <end position="2649"/>
    </location>
</feature>
<feature type="turn" evidence="82">
    <location>
        <begin position="2651"/>
        <end position="2653"/>
    </location>
</feature>
<feature type="helix" evidence="82">
    <location>
        <begin position="2654"/>
        <end position="2657"/>
    </location>
</feature>
<feature type="helix" evidence="82">
    <location>
        <begin position="2658"/>
        <end position="2671"/>
    </location>
</feature>
<feature type="helix" evidence="82">
    <location>
        <begin position="2675"/>
        <end position="2690"/>
    </location>
</feature>
<feature type="helix" evidence="82">
    <location>
        <begin position="2700"/>
        <end position="2702"/>
    </location>
</feature>
<feature type="helix" evidence="82">
    <location>
        <begin position="2704"/>
        <end position="2706"/>
    </location>
</feature>
<feature type="turn" evidence="82">
    <location>
        <begin position="2709"/>
        <end position="2715"/>
    </location>
</feature>
<feature type="helix" evidence="82">
    <location>
        <begin position="2728"/>
        <end position="2742"/>
    </location>
</feature>
<feature type="sequence variant" id="VAR_082822" description="In NF1; dbSNP:rs1597829901." evidence="40">
    <original>C</original>
    <variation>R</variation>
    <location sequence="P21359-2">
        <position position="1661"/>
    </location>
</feature>
<feature type="sequence variant" id="VAR_082823" description="In NF1; dbSNP:rs1304057833." evidence="40">
    <original>I</original>
    <variation>T</variation>
    <location sequence="P21359-2">
        <position position="1918"/>
    </location>
</feature>
<comment type="function">
    <text evidence="36 47">Stimulates the GTPase activity of Ras. NF1 shows greater affinity for Ras GAP, but lower specific activity. May be a regulator of Ras activity.</text>
</comment>
<comment type="subunit">
    <text evidence="39 42">Interacts with HTR6 (PubMed:23027611). Interacts with SPRED2 (PubMed:34626534).</text>
</comment>
<comment type="interaction">
    <interactant intactId="EBI-1172917">
        <id>P21359</id>
    </interactant>
    <interactant intactId="EBI-77613">
        <id>P05067</id>
        <label>APP</label>
    </interactant>
    <organismsDiffer>false</organismsDiffer>
    <experiments>3</experiments>
</comment>
<comment type="interaction">
    <interactant intactId="EBI-1172917">
        <id>P21359</id>
    </interactant>
    <interactant intactId="EBI-350145">
        <id>P01112</id>
        <label>HRAS</label>
    </interactant>
    <organismsDiffer>false</organismsDiffer>
    <experiments>3</experiments>
</comment>
<comment type="interaction">
    <interactant intactId="EBI-1172917">
        <id>P21359</id>
    </interactant>
    <interactant intactId="EBI-1172957">
        <id>P34741</id>
        <label>SDC2</label>
    </interactant>
    <organismsDiffer>false</organismsDiffer>
    <experiments>4</experiments>
</comment>
<comment type="interaction">
    <interactant intactId="EBI-1172917">
        <id>P21359</id>
    </interactant>
    <interactant intactId="EBI-5235340">
        <id>Q7Z699</id>
        <label>SPRED1</label>
    </interactant>
    <organismsDiffer>false</organismsDiffer>
    <experiments>6</experiments>
</comment>
<comment type="subcellular location">
    <subcellularLocation>
        <location evidence="21">Nucleus</location>
    </subcellularLocation>
    <subcellularLocation>
        <location evidence="21">Nucleus</location>
        <location evidence="21">Nucleolus</location>
    </subcellularLocation>
    <subcellularLocation>
        <location evidence="42">Cell membrane</location>
    </subcellularLocation>
</comment>
<comment type="alternative products">
    <event type="alternative splicing"/>
    <isoform>
        <id>P21359-1</id>
        <name evidence="61">II</name>
        <sequence type="displayed"/>
    </isoform>
    <isoform>
        <id>P21359-2</id>
        <name evidence="61">I</name>
        <sequence type="described" ref="VSP_001628"/>
    </isoform>
    <isoform>
        <id>P21359-3</id>
        <name>3</name>
        <sequence type="described" ref="VSP_001629 VSP_001630"/>
    </isoform>
    <isoform>
        <id>P21359-4</id>
        <name>4</name>
        <sequence type="described" ref="VSP_001631 VSP_001632"/>
    </isoform>
    <isoform>
        <id>P21359-5</id>
        <name>5</name>
        <sequence type="described" ref="VSP_043467 VSP_043468"/>
    </isoform>
    <isoform>
        <id>P21359-6</id>
        <name>6</name>
        <sequence type="described" ref="VSP_001628 VSP_053587"/>
    </isoform>
    <text>Experimental confirmation may be lacking for some isoforms.</text>
</comment>
<comment type="tissue specificity">
    <text evidence="47">Detected in brain, peripheral nerve, lung, colon and muscle.</text>
</comment>
<comment type="domain">
    <text evidence="29 32 34">Binds phospholipids via its C-terminal CRAL-TRIO domain. Binds primarily glycerophospholipids with monounsaturated C18:1 and/or C16:1 fatty acid moieties and a phosphatidylethanolamine or phosphatidylcholine headgroup. Has lesser affinity for lipids containing phosphatidylserine and phosphatidylinositol.</text>
</comment>
<comment type="PTM">
    <text evidence="2">Ubiquitinated by RNF7/RBX2, leading to its degradation.</text>
</comment>
<comment type="RNA editing">
    <location>
        <position position="1306" evidence="13 49"/>
    </location>
    <text>The stop codon (UGA) at position 1306 is created by RNA editing. Various levels of RNA editing occurs in peripheral nerve-sheath tumor samples (PNSTs) from patients with NF1. Preferentially observed in transcripts containing exon 23A.</text>
</comment>
<comment type="disease" evidence="6 7 8 9 10 11 14 15 16 17 19 20 22 23 24 25 27 31 34 35 37 40 41 44 45 48 50 51 52 53 54 55 56">
    <disease id="DI-02396">
        <name>Neurofibromatosis 1</name>
        <acronym>NF1</acronym>
        <description>A disease characterized by patches of skin pigmentation (cafe-au-lait spots), Lisch nodules of the iris, tumors in the peripheral nervous system and fibromatous skin tumors. Individuals with the disorder have increased susceptibility to the development of benign and malignant tumors.</description>
        <dbReference type="MIM" id="162200"/>
    </disease>
    <text>The disease is caused by variants affecting the gene represented in this entry.</text>
</comment>
<comment type="disease">
    <disease id="DI-01851">
        <name>Leukemia, juvenile myelomonocytic</name>
        <acronym>JMML</acronym>
        <description>An aggressive pediatric myelodysplastic syndrome/myeloproliferative disorder characterized by malignant transformation in the hematopoietic stem cell compartment with proliferation of differentiated progeny. Patients have splenomegaly, enlarged lymph nodes, rashes, and hemorrhages.</description>
        <dbReference type="MIM" id="607785"/>
    </disease>
    <text>The disease is caused by variants affecting the gene represented in this entry.</text>
</comment>
<comment type="disease">
    <disease id="DI-01140">
        <name>Watson syndrome</name>
        <acronym>WTSN</acronym>
        <description>A syndrome characterized by the presence of pulmonary stenosis, cafe-au-lait spots, and intellectual disability. It is considered as an atypical form of neurofibromatosis.</description>
        <dbReference type="MIM" id="193520"/>
    </disease>
    <text>The disease is caused by variants affecting the gene represented in this entry.</text>
</comment>
<comment type="disease" evidence="12">
    <disease id="DI-01598">
        <name>Familial spinal neurofibromatosis</name>
        <acronym>FSNF</acronym>
        <description>Considered to be an alternative form of neurofibromatosis, showing multiple spinal tumors.</description>
        <dbReference type="MIM" id="162210"/>
    </disease>
    <text>The disease is caused by variants affecting the gene represented in this entry.</text>
</comment>
<comment type="disease" evidence="18 28 33">
    <disease id="DI-02047">
        <name>Neurofibromatosis-Noonan syndrome</name>
        <acronym>NFNS</acronym>
        <description>Characterized by manifestations of both NF1 and Noonan syndrome (NS). NS is a disorder characterized by dysmorphic facial features, short stature, hypertelorism, cardiac anomalies, deafness, motor delay, and a bleeding diathesis.</description>
        <dbReference type="MIM" id="601321"/>
    </disease>
    <text>The disease is caused by variants affecting the gene represented in this entry.</text>
</comment>
<comment type="disease">
    <disease id="DI-01359">
        <name>Colorectal cancer</name>
        <acronym>CRC</acronym>
        <description>A complex disease characterized by malignant lesions arising from the inner wall of the large intestine (the colon) and the rectum. Genetic alterations are often associated with progression from premalignant lesion (adenoma) to invasive adenocarcinoma. Risk factors for cancer of the colon and rectum include colon polyps, long-standing ulcerative colitis, and genetic family history.</description>
        <dbReference type="MIM" id="114500"/>
    </disease>
    <text>The gene represented in this entry may be involved in disease pathogenesis.</text>
</comment>
<comment type="caution">
    <text evidence="68">Was originally thought to be associated with LEOPARD (LS), an autosomal dominant syndrome.</text>
</comment>
<comment type="sequence caution" evidence="67">
    <conflict type="erroneous initiation">
        <sequence resource="EMBL-CDS" id="AAA59923"/>
    </conflict>
    <text>Truncated N-terminus.</text>
</comment>
<comment type="online information" name="Atlas of Genetics and Cytogenetics in Oncology and Haematology">
    <link uri="https://atlasgeneticsoncology.org/gene/134/NF1"/>
</comment>
<comment type="online information" name="Mendelian genes neurofibromin 1 (NF1)">
    <link uri="https://databases.lovd.nl/shared/genes/NF1"/>
    <text>Leiden Open Variation Database (LOVD)</text>
</comment>
<name>NF1_HUMAN</name>
<sequence>MAAHRPVEWVQAVVSRFDEQLPIKTGQQNTHTKVSTEHNKECLINISKYKFSLVISGLTTILKNVNNMRIFGEAAEKNLYLSQLIILDTLEKCLAGQPKDTMRLDETMLVKQLLPEICHFLHTCREGNQHAAELRNSASGVLFSLSCNNFNAVFSRISTRLQELTVCSEDNVDVHDIELLQYINVDCAKLKRLLKETAFKFKALKKVAQLAVINSLEKAFWNWVENYPDEFTKLYQIPQTDMAECAEKLFDLVDGFAESTKRKAAVWPLQIILLILCPEIIQDISKDVVDENNMNKKLFLDSLRKALAGHGGSRQLTESAAIACVKLCKASTYINWEDNSVIFLLVQSMVVDLKNLLFNPSKPFSRGSQPADVDLMIDCLVSCFRISPHNNQHFKICLAQNSPSTFHYVLVNSLHRIITNSALDWWPKIDAVYCHSVELRNMFGETLHKAVQGCGAHPAIRMAPSLTFKEKVTSLKFKEKPTDLETRSYKYLLLSMVKLIHADPKLLLCNPRKQGPETQGSTAELITGLVQLVPQSHMPEIAQEAMEALLVLHQLDSIDLWNPDAPVETFWEISSQMLFYICKKLTSHQMLSSTEILKWLREILICRNKFLLKNKQADRSSCHFLLFYGVGCDIPSSGNTSQMSMDHEELLRTPGASLRKGKGNSSMDSAAGCSGTPPICRQAQTKLEVALYMFLWNPDTEAVLVAMSCFRHLCEEADIRCGVDEVSVHNLLPNYNTFMEFASVSNMMSTGRAALQKRVMALLRRIEHPTAGNTEAWEDTHAKWEQATKLILNYPKAKMEDGQAAESLHKTIVKRRMSHVSGGGSIDLSDTDSLQEWINMTGFLCALGGVCLQQRSNSGLATYSPPMGPVSERKGSMISVMSSEGNADTPVSKFMDRLLSLMVCNHEKVGLQIRTNVKDLVGLELSPALYPMLFNKLKNTISKFFDSQGQVLLTDTNTQFVEQTIAIMKNLLDNHTEGSSEHLGQASIETMMLNLVRYVRVLGNMVHAIQIKTKLCQLVEVMMARRDDLSFCQEMKFRNKMVEYLTDWVMGTSNQAADDDVKCLTRDLDQASMEAVVSLLAGLPLQPEEGDGVELMEAKSQLFLKYFTLFMNLLNDCSEVEDESAQTGGRKRGMSRRLASLRHCTVLAMSNLLNANVDSGLMHSIGLGYHKDLQTRATFMEVLTKILQQGTEFDTLAETVLADRFERLVELVTMMGDQGELPIAMALANVVPCSQWDELARVLVTLFDSRHLLYQLLWNMFSKEVELADSMQTLFRGNSLASKIMTFCFKVYGATYLQKLLDPLLRIVITSSDWQHVSFEVDPTRLEPSESLEENQRNLLQMTEKFFHAIISSSSEFPPQLRSVCHCLYQATCHSLLNKATVKEKKENKKSVVSQRFPQNSIGAVGSAMFLRFINPAIVSPYEAGILDKKPPPRIERGLKLMSKILQSIANHVLFTKEEHMRPFNDFVKSNFDAARRFFLDIASDCPTSDAVNHSLSFISDGNVLALHRLLWNNQEKIGQYLSSNRDHKAVGRRPFDKMATLLAYLGPPEHKPVADTHWSSLNLTSSKFEEFMTRHQVHEKEEFKALKTLSIFYQAGTSKAGNPIFYYVARRFKTGQINGDLLIYHVLLTLKPYYAKPYEIVVDLTHTGPSNRFKTDFLSKWFVVFPGFAYDNVSAVYIYNCNSWVREYTKYHERLLTGLKGSKRLVFIDCPGKLAEHIEHEQQKLPAATLALEEDLKVFHNALKLAHKDTKVSIKVGSTAVQVTSAERTKVLGQSVFLNDIYYASEIEEICLVDENQFTLTIANQGTPLTFMHQECEAIVQSIIHIRTRWELSQPDSIPQHTKIRPKDVPGTLLNIALLNLGSSDPSLRSAAYNLLCALTCTFNLKIEGQLLETSGLCIPANNTLFIVSISKTLAANEPHLTLEFLEECISGFSKSSIELKHLCLEYMTPWLSNLVRFCKHNDDAKRQRVTAILDKLITMTINEKQMYPSIQAKIWGSLGQITDLLDVVLDSFIKTSATGGLGSIKAEVMADTAVALASGNVKLVSSKVIGRMCKIIDKTCLSPTPTLEQHLMWDDIAILARYMLMLSFNNSLDVAAHLPYLFHVVTFLVATGPLSLRASTHGLVINIIHSLCTCSQLHFSEETKQVLRLSLTEFSLPKFYLLFGISKVKSAAVIAFRSSYRDRSFSPGSYERETFALTSLETVTEALLEIMEACMRDIPTCKWLDQWTELAQRFAFQYNPSLQPRALVVFGCISKRVSHGQIKQIIRILSKALESCLKGPDTYNSQVLIEATVIALTKLQPLLNKDSPLHKALFWVAVAVLQLDEVNLYSAGTALLEQNLHTLDSLRIFNDKSPEEVFMAIRNPLEWHCKQMDHFVGLNFNSNFNFALVGHLLKGYRHPSPAIVARTVRILHTLLTLVNKHRNCDKFEVNTQSVAYLAALLTVSEEVRSRCSLKHRKSLLLTDISMENVPMDTYPIHHGDPSYRTLKETQPWSSPKGSEGYLAATYPTVGQTSPRARKSMSLDMGQPSQANTKKLLGTRKSFDHLISDTKAPKRQEMESGITTPPKMRRVAETDYEMETQRISSSQQHPHLRKVSVSESNVLLDEEVLTDPKIQALLLTVLATLVKYTTDEFDQRILYEYLAEASVVFPKVFPVVHNLLDSKINTLLSLCQDPNLLNPIHGIVQSVVYHEESPPQYQTSYLQSFGFNGLWRFAGPFSKQTQIPDYAELIVKFLDALIDTYLPGIDEETSEESLLTPTSPYPPALQSQLSITANLNLSNSMTSLATSQHSPGIDKENVELSPTTGHCNSGRTRHGSASQVQKQRSAGSFKRNSIKKIV</sequence>
<dbReference type="EMBL" id="M89914">
    <property type="protein sequence ID" value="AAA59925.1"/>
    <property type="molecule type" value="mRNA"/>
</dbReference>
<dbReference type="EMBL" id="M82814">
    <property type="protein sequence ID" value="AAA59924.1"/>
    <property type="molecule type" value="mRNA"/>
</dbReference>
<dbReference type="EMBL" id="M60496">
    <property type="protein sequence ID" value="AAA59928.1"/>
    <property type="molecule type" value="mRNA"/>
</dbReference>
<dbReference type="EMBL" id="D12625">
    <property type="protein sequence ID" value="BAA02150.1"/>
    <property type="molecule type" value="mRNA"/>
</dbReference>
<dbReference type="EMBL" id="M38106">
    <property type="protein sequence ID" value="AAA74897.1"/>
    <property type="molecule type" value="mRNA"/>
</dbReference>
<dbReference type="EMBL" id="M38107">
    <property type="protein sequence ID" value="AAB59558.1"/>
    <property type="molecule type" value="mRNA"/>
</dbReference>
<dbReference type="EMBL" id="D42072">
    <property type="protein sequence ID" value="BAA07669.1"/>
    <property type="molecule type" value="mRNA"/>
</dbReference>
<dbReference type="EMBL" id="AY796305">
    <property type="protein sequence ID" value="AAV50004.1"/>
    <property type="molecule type" value="Genomic_DNA"/>
</dbReference>
<dbReference type="EMBL" id="AC004222">
    <property type="status" value="NOT_ANNOTATED_CDS"/>
    <property type="molecule type" value="Genomic_DNA"/>
</dbReference>
<dbReference type="EMBL" id="AC079915">
    <property type="status" value="NOT_ANNOTATED_CDS"/>
    <property type="molecule type" value="Genomic_DNA"/>
</dbReference>
<dbReference type="EMBL" id="AC134669">
    <property type="status" value="NOT_ANNOTATED_CDS"/>
    <property type="molecule type" value="Genomic_DNA"/>
</dbReference>
<dbReference type="EMBL" id="AC135724">
    <property type="status" value="NOT_ANNOTATED_CDS"/>
    <property type="molecule type" value="Genomic_DNA"/>
</dbReference>
<dbReference type="EMBL" id="AC138207">
    <property type="status" value="NOT_ANNOTATED_CDS"/>
    <property type="molecule type" value="Genomic_DNA"/>
</dbReference>
<dbReference type="EMBL" id="AC139072">
    <property type="status" value="NOT_ANNOTATED_CDS"/>
    <property type="molecule type" value="Genomic_DNA"/>
</dbReference>
<dbReference type="EMBL" id="CH471147">
    <property type="protein sequence ID" value="EAW80272.1"/>
    <property type="molecule type" value="Genomic_DNA"/>
</dbReference>
<dbReference type="EMBL" id="CH471147">
    <property type="protein sequence ID" value="EAW80275.1"/>
    <property type="molecule type" value="Genomic_DNA"/>
</dbReference>
<dbReference type="EMBL" id="AH000834">
    <property type="protein sequence ID" value="AAA18483.1"/>
    <property type="molecule type" value="Genomic_DNA"/>
</dbReference>
<dbReference type="EMBL" id="Y07853">
    <property type="protein sequence ID" value="CAA69179.1"/>
    <property type="molecule type" value="Genomic_DNA"/>
</dbReference>
<dbReference type="EMBL" id="U17690">
    <property type="protein sequence ID" value="AAB48380.1"/>
    <property type="molecule type" value="Genomic_DNA"/>
</dbReference>
<dbReference type="EMBL" id="U17680">
    <property type="protein sequence ID" value="AAB48380.1"/>
    <property type="status" value="JOINED"/>
    <property type="molecule type" value="Genomic_DNA"/>
</dbReference>
<dbReference type="EMBL" id="U17681">
    <property type="protein sequence ID" value="AAB48380.1"/>
    <property type="status" value="JOINED"/>
    <property type="molecule type" value="Genomic_DNA"/>
</dbReference>
<dbReference type="EMBL" id="U17682">
    <property type="protein sequence ID" value="AAB48380.1"/>
    <property type="status" value="JOINED"/>
    <property type="molecule type" value="Genomic_DNA"/>
</dbReference>
<dbReference type="EMBL" id="U17683">
    <property type="protein sequence ID" value="AAB48380.1"/>
    <property type="status" value="JOINED"/>
    <property type="molecule type" value="Genomic_DNA"/>
</dbReference>
<dbReference type="EMBL" id="U17684">
    <property type="protein sequence ID" value="AAB48380.1"/>
    <property type="status" value="JOINED"/>
    <property type="molecule type" value="Genomic_DNA"/>
</dbReference>
<dbReference type="EMBL" id="U17685">
    <property type="protein sequence ID" value="AAB48380.1"/>
    <property type="status" value="JOINED"/>
    <property type="molecule type" value="Genomic_DNA"/>
</dbReference>
<dbReference type="EMBL" id="U17686">
    <property type="protein sequence ID" value="AAB48380.1"/>
    <property type="status" value="JOINED"/>
    <property type="molecule type" value="Genomic_DNA"/>
</dbReference>
<dbReference type="EMBL" id="U17687">
    <property type="protein sequence ID" value="AAB48380.1"/>
    <property type="status" value="JOINED"/>
    <property type="molecule type" value="Genomic_DNA"/>
</dbReference>
<dbReference type="EMBL" id="U17688">
    <property type="protein sequence ID" value="AAB48380.1"/>
    <property type="status" value="JOINED"/>
    <property type="molecule type" value="Genomic_DNA"/>
</dbReference>
<dbReference type="EMBL" id="U17689">
    <property type="protein sequence ID" value="AAB48380.1"/>
    <property type="status" value="JOINED"/>
    <property type="molecule type" value="Genomic_DNA"/>
</dbReference>
<dbReference type="EMBL" id="U17690">
    <property type="protein sequence ID" value="AAB48379.1"/>
    <property type="molecule type" value="Genomic_DNA"/>
</dbReference>
<dbReference type="EMBL" id="U17680">
    <property type="protein sequence ID" value="AAB48379.1"/>
    <property type="status" value="JOINED"/>
    <property type="molecule type" value="Genomic_DNA"/>
</dbReference>
<dbReference type="EMBL" id="U17681">
    <property type="protein sequence ID" value="AAB48379.1"/>
    <property type="status" value="JOINED"/>
    <property type="molecule type" value="Genomic_DNA"/>
</dbReference>
<dbReference type="EMBL" id="U17682">
    <property type="protein sequence ID" value="AAB48379.1"/>
    <property type="status" value="JOINED"/>
    <property type="molecule type" value="Genomic_DNA"/>
</dbReference>
<dbReference type="EMBL" id="U17683">
    <property type="protein sequence ID" value="AAB48379.1"/>
    <property type="status" value="JOINED"/>
    <property type="molecule type" value="Genomic_DNA"/>
</dbReference>
<dbReference type="EMBL" id="U17684">
    <property type="protein sequence ID" value="AAB48379.1"/>
    <property type="status" value="JOINED"/>
    <property type="molecule type" value="Genomic_DNA"/>
</dbReference>
<dbReference type="EMBL" id="U17685">
    <property type="protein sequence ID" value="AAB48379.1"/>
    <property type="status" value="JOINED"/>
    <property type="molecule type" value="Genomic_DNA"/>
</dbReference>
<dbReference type="EMBL" id="U17687">
    <property type="protein sequence ID" value="AAB48379.1"/>
    <property type="status" value="JOINED"/>
    <property type="molecule type" value="Genomic_DNA"/>
</dbReference>
<dbReference type="EMBL" id="U17688">
    <property type="protein sequence ID" value="AAB48379.1"/>
    <property type="status" value="JOINED"/>
    <property type="molecule type" value="Genomic_DNA"/>
</dbReference>
<dbReference type="EMBL" id="U17689">
    <property type="protein sequence ID" value="AAB48379.1"/>
    <property type="status" value="JOINED"/>
    <property type="molecule type" value="Genomic_DNA"/>
</dbReference>
<dbReference type="EMBL" id="U17656">
    <property type="protein sequence ID" value="AAB48373.1"/>
    <property type="molecule type" value="Genomic_DNA"/>
</dbReference>
<dbReference type="EMBL" id="U17659">
    <property type="protein sequence ID" value="AAB48374.1"/>
    <property type="molecule type" value="Genomic_DNA"/>
</dbReference>
<dbReference type="EMBL" id="U17662">
    <property type="protein sequence ID" value="AAB48375.1"/>
    <property type="molecule type" value="Genomic_DNA"/>
</dbReference>
<dbReference type="EMBL" id="U17668">
    <property type="protein sequence ID" value="AAB48376.1"/>
    <property type="molecule type" value="Genomic_DNA"/>
</dbReference>
<dbReference type="EMBL" id="U17667">
    <property type="protein sequence ID" value="AAB48376.1"/>
    <property type="status" value="JOINED"/>
    <property type="molecule type" value="Genomic_DNA"/>
</dbReference>
<dbReference type="EMBL" id="U17673">
    <property type="protein sequence ID" value="AAB48377.1"/>
    <property type="molecule type" value="Genomic_DNA"/>
</dbReference>
<dbReference type="EMBL" id="U17677">
    <property type="protein sequence ID" value="AAB48378.1"/>
    <property type="molecule type" value="Genomic_DNA"/>
</dbReference>
<dbReference type="EMBL" id="U17676">
    <property type="protein sequence ID" value="AAB48378.1"/>
    <property type="status" value="JOINED"/>
    <property type="molecule type" value="Genomic_DNA"/>
</dbReference>
<dbReference type="EMBL" id="M60915">
    <property type="protein sequence ID" value="AAA59921.1"/>
    <property type="molecule type" value="mRNA"/>
</dbReference>
<dbReference type="EMBL" id="M60915">
    <property type="protein sequence ID" value="AAA59922.1"/>
    <property type="molecule type" value="mRNA"/>
</dbReference>
<dbReference type="EMBL" id="M61213">
    <property type="protein sequence ID" value="AAA59923.1"/>
    <property type="status" value="ALT_INIT"/>
    <property type="molecule type" value="mRNA"/>
</dbReference>
<dbReference type="EMBL" id="S51751">
    <property type="protein sequence ID" value="AAB24636.1"/>
    <property type="molecule type" value="mRNA"/>
</dbReference>
<dbReference type="EMBL" id="D10490">
    <property type="protein sequence ID" value="BAA01371.1"/>
    <property type="molecule type" value="mRNA"/>
</dbReference>
<dbReference type="CCDS" id="CCDS11264.1">
    <molecule id="P21359-2"/>
</dbReference>
<dbReference type="CCDS" id="CCDS42292.1">
    <molecule id="P21359-1"/>
</dbReference>
<dbReference type="CCDS" id="CCDS45645.1">
    <molecule id="P21359-5"/>
</dbReference>
<dbReference type="PIR" id="B55282">
    <property type="entry name" value="B55282"/>
</dbReference>
<dbReference type="PIR" id="I78852">
    <property type="entry name" value="I78852"/>
</dbReference>
<dbReference type="RefSeq" id="NP_000258.1">
    <molecule id="P21359-2"/>
    <property type="nucleotide sequence ID" value="NM_000267.3"/>
</dbReference>
<dbReference type="RefSeq" id="NP_001035957.1">
    <molecule id="P21359-1"/>
    <property type="nucleotide sequence ID" value="NM_001042492.3"/>
</dbReference>
<dbReference type="RefSeq" id="NP_001121619.1">
    <molecule id="P21359-5"/>
    <property type="nucleotide sequence ID" value="NM_001128147.3"/>
</dbReference>
<dbReference type="PDB" id="1NF1">
    <property type="method" value="X-ray"/>
    <property type="resolution" value="2.50 A"/>
    <property type="chains" value="A=1198-1551"/>
</dbReference>
<dbReference type="PDB" id="2D4Q">
    <property type="method" value="X-ray"/>
    <property type="resolution" value="2.30 A"/>
    <property type="chains" value="A/B=1581-1837"/>
</dbReference>
<dbReference type="PDB" id="2E2X">
    <property type="method" value="X-ray"/>
    <property type="resolution" value="2.50 A"/>
    <property type="chains" value="A/B=1566-1837"/>
</dbReference>
<dbReference type="PDB" id="3P7Z">
    <property type="method" value="X-ray"/>
    <property type="resolution" value="2.65 A"/>
    <property type="chains" value="A/B=1566-1837"/>
</dbReference>
<dbReference type="PDB" id="3PEG">
    <property type="method" value="X-ray"/>
    <property type="resolution" value="2.52 A"/>
    <property type="chains" value="A=1566-1837"/>
</dbReference>
<dbReference type="PDB" id="3PG7">
    <property type="method" value="X-ray"/>
    <property type="resolution" value="2.19 A"/>
    <property type="chains" value="A/B=1581-1837"/>
</dbReference>
<dbReference type="PDB" id="6OB2">
    <property type="method" value="X-ray"/>
    <property type="resolution" value="2.85 A"/>
    <property type="chains" value="B/D=1209-1484"/>
</dbReference>
<dbReference type="PDB" id="6OB3">
    <property type="method" value="X-ray"/>
    <property type="resolution" value="2.10 A"/>
    <property type="chains" value="B/D=1209-1484"/>
</dbReference>
<dbReference type="PDB" id="6V65">
    <property type="method" value="X-ray"/>
    <property type="resolution" value="2.76 A"/>
    <property type="chains" value="B=1203-1551"/>
</dbReference>
<dbReference type="PDB" id="6V6F">
    <property type="method" value="X-ray"/>
    <property type="resolution" value="2.54 A"/>
    <property type="chains" value="B=1203-1551"/>
</dbReference>
<dbReference type="PDB" id="7MOC">
    <property type="method" value="EM"/>
    <property type="resolution" value="4.56 A"/>
    <property type="chains" value="A/B=2-2839"/>
</dbReference>
<dbReference type="PDB" id="7MP5">
    <property type="method" value="EM"/>
    <property type="resolution" value="5.60 A"/>
    <property type="chains" value="A/B=2-2839"/>
</dbReference>
<dbReference type="PDB" id="7MP6">
    <property type="method" value="EM"/>
    <property type="resolution" value="6.25 A"/>
    <property type="chains" value="A/B=2-2839"/>
</dbReference>
<dbReference type="PDB" id="7PGP">
    <property type="method" value="EM"/>
    <property type="resolution" value="3.10 A"/>
    <property type="chains" value="F/N=1-2839"/>
</dbReference>
<dbReference type="PDB" id="7PGQ">
    <property type="method" value="EM"/>
    <property type="resolution" value="3.50 A"/>
    <property type="chains" value="F/N=1-2839"/>
</dbReference>
<dbReference type="PDB" id="7PGR">
    <property type="method" value="EM"/>
    <property type="resolution" value="4.00 A"/>
    <property type="chains" value="F/N=1-2839"/>
</dbReference>
<dbReference type="PDB" id="7PGS">
    <property type="method" value="EM"/>
    <property type="resolution" value="3.40 A"/>
    <property type="chains" value="F/N=1-2839"/>
</dbReference>
<dbReference type="PDB" id="7PGT">
    <property type="method" value="EM"/>
    <property type="resolution" value="4.80 A"/>
    <property type="chains" value="F/N=1-2839"/>
</dbReference>
<dbReference type="PDB" id="7PGU">
    <property type="method" value="EM"/>
    <property type="resolution" value="3.30 A"/>
    <property type="chains" value="F/N=1-2839"/>
</dbReference>
<dbReference type="PDB" id="7R03">
    <property type="method" value="EM"/>
    <property type="resolution" value="3.60 A"/>
    <property type="chains" value="A/B=1-2839"/>
</dbReference>
<dbReference type="PDB" id="7R04">
    <property type="method" value="EM"/>
    <property type="resolution" value="3.70 A"/>
    <property type="chains" value="A/B=1-2839"/>
</dbReference>
<dbReference type="PDB" id="8E20">
    <property type="method" value="EM"/>
    <property type="resolution" value="3.60 A"/>
    <property type="chains" value="A/B=1-2839"/>
</dbReference>
<dbReference type="PDB" id="8EDL">
    <property type="method" value="EM"/>
    <property type="resolution" value="3.70 A"/>
    <property type="chains" value="A=1-2839"/>
</dbReference>
<dbReference type="PDB" id="8EDM">
    <property type="method" value="EM"/>
    <property type="resolution" value="3.60 A"/>
    <property type="chains" value="A/B=1-2839"/>
</dbReference>
<dbReference type="PDB" id="8EDN">
    <property type="method" value="EM"/>
    <property type="resolution" value="3.80 A"/>
    <property type="chains" value="A=1-2839"/>
</dbReference>
<dbReference type="PDB" id="8EDO">
    <property type="method" value="EM"/>
    <property type="resolution" value="3.40 A"/>
    <property type="chains" value="A/B=1039-2302"/>
</dbReference>
<dbReference type="PDBsum" id="1NF1"/>
<dbReference type="PDBsum" id="2D4Q"/>
<dbReference type="PDBsum" id="2E2X"/>
<dbReference type="PDBsum" id="3P7Z"/>
<dbReference type="PDBsum" id="3PEG"/>
<dbReference type="PDBsum" id="3PG7"/>
<dbReference type="PDBsum" id="6OB2"/>
<dbReference type="PDBsum" id="6OB3"/>
<dbReference type="PDBsum" id="6V65"/>
<dbReference type="PDBsum" id="6V6F"/>
<dbReference type="PDBsum" id="7MOC"/>
<dbReference type="PDBsum" id="7MP5"/>
<dbReference type="PDBsum" id="7MP6"/>
<dbReference type="PDBsum" id="7PGP"/>
<dbReference type="PDBsum" id="7PGQ"/>
<dbReference type="PDBsum" id="7PGR"/>
<dbReference type="PDBsum" id="7PGS"/>
<dbReference type="PDBsum" id="7PGT"/>
<dbReference type="PDBsum" id="7PGU"/>
<dbReference type="PDBsum" id="7R03"/>
<dbReference type="PDBsum" id="7R04"/>
<dbReference type="PDBsum" id="8E20"/>
<dbReference type="PDBsum" id="8EDL"/>
<dbReference type="PDBsum" id="8EDM"/>
<dbReference type="PDBsum" id="8EDN"/>
<dbReference type="PDBsum" id="8EDO"/>
<dbReference type="EMDB" id="EMD-13391"/>
<dbReference type="EMDB" id="EMD-13392"/>
<dbReference type="EMDB" id="EMD-13393"/>
<dbReference type="EMDB" id="EMD-13394"/>
<dbReference type="EMDB" id="EMD-13395"/>
<dbReference type="EMDB" id="EMD-13396"/>
<dbReference type="EMDB" id="EMD-14218"/>
<dbReference type="EMDB" id="EMD-14219"/>
<dbReference type="EMDB" id="EMD-23924"/>
<dbReference type="EMDB" id="EMD-23929"/>
<dbReference type="EMDB" id="EMD-23930"/>
<dbReference type="EMDB" id="EMD-27826"/>
<dbReference type="EMDB" id="EMD-28035"/>
<dbReference type="EMDB" id="EMD-28036"/>
<dbReference type="EMDB" id="EMD-28037"/>
<dbReference type="EMDB" id="EMD-28038"/>
<dbReference type="SMR" id="P21359"/>
<dbReference type="BioGRID" id="110836">
    <property type="interactions" value="227"/>
</dbReference>
<dbReference type="CORUM" id="P21359"/>
<dbReference type="FunCoup" id="P21359">
    <property type="interactions" value="3476"/>
</dbReference>
<dbReference type="IntAct" id="P21359">
    <property type="interactions" value="68"/>
</dbReference>
<dbReference type="MINT" id="P21359"/>
<dbReference type="STRING" id="9606.ENSP00000351015"/>
<dbReference type="GlyGen" id="P21359">
    <property type="glycosylation" value="5 sites, 1 O-linked glycan (3 sites)"/>
</dbReference>
<dbReference type="iPTMnet" id="P21359"/>
<dbReference type="PhosphoSitePlus" id="P21359"/>
<dbReference type="SwissPalm" id="P21359"/>
<dbReference type="BioMuta" id="NF1"/>
<dbReference type="DMDM" id="548350"/>
<dbReference type="CPTAC" id="CPTAC-1622"/>
<dbReference type="jPOST" id="P21359"/>
<dbReference type="MassIVE" id="P21359"/>
<dbReference type="PaxDb" id="9606-ENSP00000351015"/>
<dbReference type="PeptideAtlas" id="P21359"/>
<dbReference type="ProteomicsDB" id="53861">
    <molecule id="P21359-1"/>
</dbReference>
<dbReference type="ProteomicsDB" id="53862">
    <molecule id="P21359-2"/>
</dbReference>
<dbReference type="ProteomicsDB" id="53863">
    <molecule id="P21359-3"/>
</dbReference>
<dbReference type="ProteomicsDB" id="53864">
    <molecule id="P21359-4"/>
</dbReference>
<dbReference type="ProteomicsDB" id="53865">
    <molecule id="P21359-5"/>
</dbReference>
<dbReference type="Pumba" id="P21359"/>
<dbReference type="Antibodypedia" id="3471">
    <property type="antibodies" value="480 antibodies from 39 providers"/>
</dbReference>
<dbReference type="CPTC" id="P21359">
    <property type="antibodies" value="3 antibodies"/>
</dbReference>
<dbReference type="DNASU" id="4763"/>
<dbReference type="Ensembl" id="ENST00000356175.7">
    <molecule id="P21359-2"/>
    <property type="protein sequence ID" value="ENSP00000348498.3"/>
    <property type="gene ID" value="ENSG00000196712.20"/>
</dbReference>
<dbReference type="Ensembl" id="ENST00000358273.9">
    <molecule id="P21359-1"/>
    <property type="protein sequence ID" value="ENSP00000351015.4"/>
    <property type="gene ID" value="ENSG00000196712.20"/>
</dbReference>
<dbReference type="Ensembl" id="ENST00000431387.8">
    <molecule id="P21359-5"/>
    <property type="protein sequence ID" value="ENSP00000412921.4"/>
    <property type="gene ID" value="ENSG00000196712.20"/>
</dbReference>
<dbReference type="Ensembl" id="ENST00000487476.5">
    <molecule id="P21359-3"/>
    <property type="protein sequence ID" value="ENSP00000491589.1"/>
    <property type="gene ID" value="ENSG00000196712.20"/>
</dbReference>
<dbReference type="GeneID" id="4763"/>
<dbReference type="KEGG" id="hsa:4763"/>
<dbReference type="MANE-Select" id="ENST00000358273.9">
    <property type="protein sequence ID" value="ENSP00000351015.4"/>
    <property type="RefSeq nucleotide sequence ID" value="NM_001042492.3"/>
    <property type="RefSeq protein sequence ID" value="NP_001035957.1"/>
</dbReference>
<dbReference type="UCSC" id="uc002hgf.3">
    <molecule id="P21359-1"/>
    <property type="organism name" value="human"/>
</dbReference>
<dbReference type="AGR" id="HGNC:7765"/>
<dbReference type="CTD" id="4763"/>
<dbReference type="DisGeNET" id="4763"/>
<dbReference type="GeneCards" id="NF1"/>
<dbReference type="GeneReviews" id="NF1"/>
<dbReference type="HGNC" id="HGNC:7765">
    <property type="gene designation" value="NF1"/>
</dbReference>
<dbReference type="HPA" id="ENSG00000196712">
    <property type="expression patterns" value="Low tissue specificity"/>
</dbReference>
<dbReference type="MalaCards" id="NF1"/>
<dbReference type="MIM" id="114500">
    <property type="type" value="phenotype"/>
</dbReference>
<dbReference type="MIM" id="162200">
    <property type="type" value="phenotype"/>
</dbReference>
<dbReference type="MIM" id="162210">
    <property type="type" value="phenotype"/>
</dbReference>
<dbReference type="MIM" id="193520">
    <property type="type" value="phenotype"/>
</dbReference>
<dbReference type="MIM" id="601321">
    <property type="type" value="phenotype"/>
</dbReference>
<dbReference type="MIM" id="607785">
    <property type="type" value="phenotype"/>
</dbReference>
<dbReference type="MIM" id="613113">
    <property type="type" value="gene"/>
</dbReference>
<dbReference type="neXtProt" id="NX_P21359"/>
<dbReference type="OpenTargets" id="ENSG00000196712"/>
<dbReference type="Orphanet" id="97685">
    <property type="disease" value="17q11 microdeletion syndrome"/>
</dbReference>
<dbReference type="Orphanet" id="139474">
    <property type="disease" value="17q11.2 microduplication syndrome"/>
</dbReference>
<dbReference type="Orphanet" id="99756">
    <property type="disease" value="Alveolar rhabdomyosarcoma"/>
</dbReference>
<dbReference type="Orphanet" id="99757">
    <property type="disease" value="Embryonal rhabdomyosarcoma"/>
</dbReference>
<dbReference type="Orphanet" id="29072">
    <property type="disease" value="Hereditary pheochromocytoma-paraganglioma"/>
</dbReference>
<dbReference type="Orphanet" id="86834">
    <property type="disease" value="Juvenile myelomonocytic leukemia"/>
</dbReference>
<dbReference type="Orphanet" id="363700">
    <property type="disease" value="Neurofibromatosis type 1 due to NF1 mutation or intragenic deletion"/>
</dbReference>
<dbReference type="Orphanet" id="638">
    <property type="disease" value="Neurofibromatosis-Noonan syndrome"/>
</dbReference>
<dbReference type="Orphanet" id="293199">
    <property type="disease" value="Pleomorphic rhabdomyosarcoma"/>
</dbReference>
<dbReference type="PharmGKB" id="PA31572"/>
<dbReference type="VEuPathDB" id="HostDB:ENSG00000196712"/>
<dbReference type="eggNOG" id="KOG1826">
    <property type="taxonomic scope" value="Eukaryota"/>
</dbReference>
<dbReference type="GeneTree" id="ENSGT00550000074797"/>
<dbReference type="HOGENOM" id="CLU_036305_0_0_1"/>
<dbReference type="InParanoid" id="P21359"/>
<dbReference type="OMA" id="TKEPYMF"/>
<dbReference type="OrthoDB" id="28245at2759"/>
<dbReference type="PAN-GO" id="P21359">
    <property type="GO annotations" value="0 GO annotations based on evolutionary models"/>
</dbReference>
<dbReference type="PhylomeDB" id="P21359"/>
<dbReference type="TreeFam" id="TF300302"/>
<dbReference type="PathwayCommons" id="P21359"/>
<dbReference type="Reactome" id="R-HSA-5658442">
    <property type="pathway name" value="Regulation of RAS by GAPs"/>
</dbReference>
<dbReference type="Reactome" id="R-HSA-6802953">
    <property type="pathway name" value="RAS signaling downstream of NF1 loss-of-function variants"/>
</dbReference>
<dbReference type="SignaLink" id="P21359"/>
<dbReference type="SIGNOR" id="P21359"/>
<dbReference type="BioGRID-ORCS" id="4763">
    <property type="hits" value="62 hits in 1192 CRISPR screens"/>
</dbReference>
<dbReference type="CD-CODE" id="91857CE7">
    <property type="entry name" value="Nucleolus"/>
</dbReference>
<dbReference type="ChiTaRS" id="NF1">
    <property type="organism name" value="human"/>
</dbReference>
<dbReference type="EvolutionaryTrace" id="P21359"/>
<dbReference type="GeneWiki" id="Neurofibromin_1"/>
<dbReference type="GenomeRNAi" id="4763"/>
<dbReference type="Pharos" id="P21359">
    <property type="development level" value="Tbio"/>
</dbReference>
<dbReference type="PRO" id="PR:P21359"/>
<dbReference type="Proteomes" id="UP000005640">
    <property type="component" value="Chromosome 17"/>
</dbReference>
<dbReference type="RNAct" id="P21359">
    <property type="molecule type" value="protein"/>
</dbReference>
<dbReference type="Bgee" id="ENSG00000196712">
    <property type="expression patterns" value="Expressed in colonic epithelium and 202 other cell types or tissues"/>
</dbReference>
<dbReference type="ExpressionAtlas" id="P21359">
    <property type="expression patterns" value="baseline and differential"/>
</dbReference>
<dbReference type="GO" id="GO:0030424">
    <property type="term" value="C:axon"/>
    <property type="evidence" value="ECO:0000314"/>
    <property type="project" value="HGNC-UCL"/>
</dbReference>
<dbReference type="GO" id="GO:0005737">
    <property type="term" value="C:cytoplasm"/>
    <property type="evidence" value="ECO:0000250"/>
    <property type="project" value="HGNC-UCL"/>
</dbReference>
<dbReference type="GO" id="GO:0005829">
    <property type="term" value="C:cytosol"/>
    <property type="evidence" value="ECO:0000304"/>
    <property type="project" value="Reactome"/>
</dbReference>
<dbReference type="GO" id="GO:0030425">
    <property type="term" value="C:dendrite"/>
    <property type="evidence" value="ECO:0000314"/>
    <property type="project" value="HGNC-UCL"/>
</dbReference>
<dbReference type="GO" id="GO:0098978">
    <property type="term" value="C:glutamatergic synapse"/>
    <property type="evidence" value="ECO:0007669"/>
    <property type="project" value="Ensembl"/>
</dbReference>
<dbReference type="GO" id="GO:0016020">
    <property type="term" value="C:membrane"/>
    <property type="evidence" value="ECO:0007005"/>
    <property type="project" value="UniProtKB"/>
</dbReference>
<dbReference type="GO" id="GO:0005730">
    <property type="term" value="C:nucleolus"/>
    <property type="evidence" value="ECO:0007669"/>
    <property type="project" value="UniProtKB-SubCell"/>
</dbReference>
<dbReference type="GO" id="GO:0005654">
    <property type="term" value="C:nucleoplasm"/>
    <property type="evidence" value="ECO:0000314"/>
    <property type="project" value="HPA"/>
</dbReference>
<dbReference type="GO" id="GO:0005634">
    <property type="term" value="C:nucleus"/>
    <property type="evidence" value="ECO:0000250"/>
    <property type="project" value="HGNC-UCL"/>
</dbReference>
<dbReference type="GO" id="GO:0005886">
    <property type="term" value="C:plasma membrane"/>
    <property type="evidence" value="ECO:0000314"/>
    <property type="project" value="HPA"/>
</dbReference>
<dbReference type="GO" id="GO:0098793">
    <property type="term" value="C:presynapse"/>
    <property type="evidence" value="ECO:0007669"/>
    <property type="project" value="GOC"/>
</dbReference>
<dbReference type="GO" id="GO:0005096">
    <property type="term" value="F:GTPase activator activity"/>
    <property type="evidence" value="ECO:0000314"/>
    <property type="project" value="UniProtKB"/>
</dbReference>
<dbReference type="GO" id="GO:0031210">
    <property type="term" value="F:phosphatidylcholine binding"/>
    <property type="evidence" value="ECO:0000314"/>
    <property type="project" value="UniProtKB"/>
</dbReference>
<dbReference type="GO" id="GO:0008429">
    <property type="term" value="F:phosphatidylethanolamine binding"/>
    <property type="evidence" value="ECO:0000314"/>
    <property type="project" value="UniProtKB"/>
</dbReference>
<dbReference type="GO" id="GO:0030036">
    <property type="term" value="P:actin cytoskeleton organization"/>
    <property type="evidence" value="ECO:0000250"/>
    <property type="project" value="HGNC-UCL"/>
</dbReference>
<dbReference type="GO" id="GO:0030325">
    <property type="term" value="P:adrenal gland development"/>
    <property type="evidence" value="ECO:0000250"/>
    <property type="project" value="HGNC-UCL"/>
</dbReference>
<dbReference type="GO" id="GO:0021764">
    <property type="term" value="P:amygdala development"/>
    <property type="evidence" value="ECO:0007669"/>
    <property type="project" value="Ensembl"/>
</dbReference>
<dbReference type="GO" id="GO:0001525">
    <property type="term" value="P:angiogenesis"/>
    <property type="evidence" value="ECO:0007669"/>
    <property type="project" value="Ensembl"/>
</dbReference>
<dbReference type="GO" id="GO:0048844">
    <property type="term" value="P:artery morphogenesis"/>
    <property type="evidence" value="ECO:0000250"/>
    <property type="project" value="HGNC-UCL"/>
</dbReference>
<dbReference type="GO" id="GO:0007420">
    <property type="term" value="P:brain development"/>
    <property type="evidence" value="ECO:0000250"/>
    <property type="project" value="HGNC-UCL"/>
</dbReference>
<dbReference type="GO" id="GO:0048593">
    <property type="term" value="P:camera-type eye morphogenesis"/>
    <property type="evidence" value="ECO:0000250"/>
    <property type="project" value="HGNC-UCL"/>
</dbReference>
<dbReference type="GO" id="GO:0007154">
    <property type="term" value="P:cell communication"/>
    <property type="evidence" value="ECO:0000250"/>
    <property type="project" value="HGNC-UCL"/>
</dbReference>
<dbReference type="GO" id="GO:0034605">
    <property type="term" value="P:cellular response to heat"/>
    <property type="evidence" value="ECO:0007669"/>
    <property type="project" value="Ensembl"/>
</dbReference>
<dbReference type="GO" id="GO:0021987">
    <property type="term" value="P:cerebral cortex development"/>
    <property type="evidence" value="ECO:0000250"/>
    <property type="project" value="HGNC-UCL"/>
</dbReference>
<dbReference type="GO" id="GO:0050890">
    <property type="term" value="P:cognition"/>
    <property type="evidence" value="ECO:0000315"/>
    <property type="project" value="HGNC-UCL"/>
</dbReference>
<dbReference type="GO" id="GO:0030199">
    <property type="term" value="P:collagen fibril organization"/>
    <property type="evidence" value="ECO:0000250"/>
    <property type="project" value="HGNC-UCL"/>
</dbReference>
<dbReference type="GO" id="GO:0001935">
    <property type="term" value="P:endothelial cell proliferation"/>
    <property type="evidence" value="ECO:0007669"/>
    <property type="project" value="Ensembl"/>
</dbReference>
<dbReference type="GO" id="GO:0030198">
    <property type="term" value="P:extracellular matrix organization"/>
    <property type="evidence" value="ECO:0000250"/>
    <property type="project" value="HGNC-UCL"/>
</dbReference>
<dbReference type="GO" id="GO:0097192">
    <property type="term" value="P:extrinsic apoptotic signaling pathway in absence of ligand"/>
    <property type="evidence" value="ECO:0007669"/>
    <property type="project" value="Ensembl"/>
</dbReference>
<dbReference type="GO" id="GO:0008625">
    <property type="term" value="P:extrinsic apoptotic signaling pathway via death domain receptors"/>
    <property type="evidence" value="ECO:0007669"/>
    <property type="project" value="Ensembl"/>
</dbReference>
<dbReference type="GO" id="GO:0048144">
    <property type="term" value="P:fibroblast proliferation"/>
    <property type="evidence" value="ECO:0007669"/>
    <property type="project" value="Ensembl"/>
</dbReference>
<dbReference type="GO" id="GO:0021897">
    <property type="term" value="P:forebrain astrocyte development"/>
    <property type="evidence" value="ECO:0000250"/>
    <property type="project" value="HGNC-UCL"/>
</dbReference>
<dbReference type="GO" id="GO:0048853">
    <property type="term" value="P:forebrain morphogenesis"/>
    <property type="evidence" value="ECO:0000250"/>
    <property type="project" value="HGNC-UCL"/>
</dbReference>
<dbReference type="GO" id="GO:0061534">
    <property type="term" value="P:gamma-aminobutyric acid secretion, neurotransmission"/>
    <property type="evidence" value="ECO:0007669"/>
    <property type="project" value="Ensembl"/>
</dbReference>
<dbReference type="GO" id="GO:0061535">
    <property type="term" value="P:glutamate secretion, neurotransmission"/>
    <property type="evidence" value="ECO:0007669"/>
    <property type="project" value="Ensembl"/>
</dbReference>
<dbReference type="GO" id="GO:0048820">
    <property type="term" value="P:hair follicle maturation"/>
    <property type="evidence" value="ECO:0007669"/>
    <property type="project" value="Ensembl"/>
</dbReference>
<dbReference type="GO" id="GO:0007507">
    <property type="term" value="P:heart development"/>
    <property type="evidence" value="ECO:0000250"/>
    <property type="project" value="HGNC-UCL"/>
</dbReference>
<dbReference type="GO" id="GO:0001889">
    <property type="term" value="P:liver development"/>
    <property type="evidence" value="ECO:0000250"/>
    <property type="project" value="HGNC-UCL"/>
</dbReference>
<dbReference type="GO" id="GO:0060291">
    <property type="term" value="P:long-term synaptic potentiation"/>
    <property type="evidence" value="ECO:0007669"/>
    <property type="project" value="Ensembl"/>
</dbReference>
<dbReference type="GO" id="GO:0000165">
    <property type="term" value="P:MAPK cascade"/>
    <property type="evidence" value="ECO:0000250"/>
    <property type="project" value="HGNC-UCL"/>
</dbReference>
<dbReference type="GO" id="GO:0033024">
    <property type="term" value="P:mast cell apoptotic process"/>
    <property type="evidence" value="ECO:0007669"/>
    <property type="project" value="Ensembl"/>
</dbReference>
<dbReference type="GO" id="GO:0070662">
    <property type="term" value="P:mast cell proliferation"/>
    <property type="evidence" value="ECO:0007669"/>
    <property type="project" value="Ensembl"/>
</dbReference>
<dbReference type="GO" id="GO:0001656">
    <property type="term" value="P:metanephros development"/>
    <property type="evidence" value="ECO:0000250"/>
    <property type="project" value="HGNC-UCL"/>
</dbReference>
<dbReference type="GO" id="GO:0022011">
    <property type="term" value="P:myelination in peripheral nervous system"/>
    <property type="evidence" value="ECO:0000250"/>
    <property type="project" value="HGNC-UCL"/>
</dbReference>
<dbReference type="GO" id="GO:0097529">
    <property type="term" value="P:myeloid leukocyte migration"/>
    <property type="evidence" value="ECO:0007669"/>
    <property type="project" value="Ensembl"/>
</dbReference>
<dbReference type="GO" id="GO:0016525">
    <property type="term" value="P:negative regulation of angiogenesis"/>
    <property type="evidence" value="ECO:0007669"/>
    <property type="project" value="Ensembl"/>
</dbReference>
<dbReference type="GO" id="GO:0048712">
    <property type="term" value="P:negative regulation of astrocyte differentiation"/>
    <property type="evidence" value="ECO:0007669"/>
    <property type="project" value="Ensembl"/>
</dbReference>
<dbReference type="GO" id="GO:0030336">
    <property type="term" value="P:negative regulation of cell migration"/>
    <property type="evidence" value="ECO:0000315"/>
    <property type="project" value="MGI"/>
</dbReference>
<dbReference type="GO" id="GO:0001953">
    <property type="term" value="P:negative regulation of cell-matrix adhesion"/>
    <property type="evidence" value="ECO:0007669"/>
    <property type="project" value="Ensembl"/>
</dbReference>
<dbReference type="GO" id="GO:0001937">
    <property type="term" value="P:negative regulation of endothelial cell proliferation"/>
    <property type="evidence" value="ECO:0000315"/>
    <property type="project" value="MGI"/>
</dbReference>
<dbReference type="GO" id="GO:0048147">
    <property type="term" value="P:negative regulation of fibroblast proliferation"/>
    <property type="evidence" value="ECO:0000250"/>
    <property type="project" value="UniProtKB"/>
</dbReference>
<dbReference type="GO" id="GO:0002686">
    <property type="term" value="P:negative regulation of leukocyte migration"/>
    <property type="evidence" value="ECO:0007669"/>
    <property type="project" value="Ensembl"/>
</dbReference>
<dbReference type="GO" id="GO:0043409">
    <property type="term" value="P:negative regulation of MAPK cascade"/>
    <property type="evidence" value="ECO:0000315"/>
    <property type="project" value="MGI"/>
</dbReference>
<dbReference type="GO" id="GO:0070667">
    <property type="term" value="P:negative regulation of mast cell proliferation"/>
    <property type="evidence" value="ECO:0007669"/>
    <property type="project" value="Ensembl"/>
</dbReference>
<dbReference type="GO" id="GO:0007406">
    <property type="term" value="P:negative regulation of neuroblast proliferation"/>
    <property type="evidence" value="ECO:0000250"/>
    <property type="project" value="HGNC-UCL"/>
</dbReference>
<dbReference type="GO" id="GO:0046929">
    <property type="term" value="P:negative regulation of neurotransmitter secretion"/>
    <property type="evidence" value="ECO:0007669"/>
    <property type="project" value="Ensembl"/>
</dbReference>
<dbReference type="GO" id="GO:0048715">
    <property type="term" value="P:negative regulation of oligodendrocyte differentiation"/>
    <property type="evidence" value="ECO:0000250"/>
    <property type="project" value="HGNC-UCL"/>
</dbReference>
<dbReference type="GO" id="GO:0045671">
    <property type="term" value="P:negative regulation of osteoclast differentiation"/>
    <property type="evidence" value="ECO:0007669"/>
    <property type="project" value="Ensembl"/>
</dbReference>
<dbReference type="GO" id="GO:0042308">
    <property type="term" value="P:negative regulation of protein import into nucleus"/>
    <property type="evidence" value="ECO:0007669"/>
    <property type="project" value="Ensembl"/>
</dbReference>
<dbReference type="GO" id="GO:0035021">
    <property type="term" value="P:negative regulation of Rac protein signal transduction"/>
    <property type="evidence" value="ECO:0007669"/>
    <property type="project" value="Ensembl"/>
</dbReference>
<dbReference type="GO" id="GO:0046580">
    <property type="term" value="P:negative regulation of Ras protein signal transduction"/>
    <property type="evidence" value="ECO:0007669"/>
    <property type="project" value="Ensembl"/>
</dbReference>
<dbReference type="GO" id="GO:1900148">
    <property type="term" value="P:negative regulation of Schwann cell migration"/>
    <property type="evidence" value="ECO:0007669"/>
    <property type="project" value="Ensembl"/>
</dbReference>
<dbReference type="GO" id="GO:0010626">
    <property type="term" value="P:negative regulation of Schwann cell proliferation"/>
    <property type="evidence" value="ECO:0007669"/>
    <property type="project" value="Ensembl"/>
</dbReference>
<dbReference type="GO" id="GO:2000647">
    <property type="term" value="P:negative regulation of stem cell proliferation"/>
    <property type="evidence" value="ECO:0007669"/>
    <property type="project" value="Ensembl"/>
</dbReference>
<dbReference type="GO" id="GO:1904753">
    <property type="term" value="P:negative regulation of vascular associated smooth muscle cell migration"/>
    <property type="evidence" value="ECO:0007669"/>
    <property type="project" value="Ensembl"/>
</dbReference>
<dbReference type="GO" id="GO:0021915">
    <property type="term" value="P:neural tube development"/>
    <property type="evidence" value="ECO:0007669"/>
    <property type="project" value="Ensembl"/>
</dbReference>
<dbReference type="GO" id="GO:0007405">
    <property type="term" value="P:neuroblast proliferation"/>
    <property type="evidence" value="ECO:0007669"/>
    <property type="project" value="Ensembl"/>
</dbReference>
<dbReference type="GO" id="GO:0051402">
    <property type="term" value="P:neuron apoptotic process"/>
    <property type="evidence" value="ECO:0007669"/>
    <property type="project" value="Ensembl"/>
</dbReference>
<dbReference type="GO" id="GO:0098597">
    <property type="term" value="P:observational learning"/>
    <property type="evidence" value="ECO:0007669"/>
    <property type="project" value="Ensembl"/>
</dbReference>
<dbReference type="GO" id="GO:0048709">
    <property type="term" value="P:oligodendrocyte differentiation"/>
    <property type="evidence" value="ECO:0007669"/>
    <property type="project" value="Ensembl"/>
</dbReference>
<dbReference type="GO" id="GO:0001649">
    <property type="term" value="P:osteoblast differentiation"/>
    <property type="evidence" value="ECO:0000250"/>
    <property type="project" value="HGNC-UCL"/>
</dbReference>
<dbReference type="GO" id="GO:0030316">
    <property type="term" value="P:osteoclast differentiation"/>
    <property type="evidence" value="ECO:0007669"/>
    <property type="project" value="Ensembl"/>
</dbReference>
<dbReference type="GO" id="GO:0007422">
    <property type="term" value="P:peripheral nervous system development"/>
    <property type="evidence" value="ECO:0000250"/>
    <property type="project" value="HGNC-UCL"/>
</dbReference>
<dbReference type="GO" id="GO:0043491">
    <property type="term" value="P:phosphatidylinositol 3-kinase/protein kinase B signal transduction"/>
    <property type="evidence" value="ECO:0000250"/>
    <property type="project" value="HGNC-UCL"/>
</dbReference>
<dbReference type="GO" id="GO:0043473">
    <property type="term" value="P:pigmentation"/>
    <property type="evidence" value="ECO:0000250"/>
    <property type="project" value="HGNC-UCL"/>
</dbReference>
<dbReference type="GO" id="GO:0043065">
    <property type="term" value="P:positive regulation of apoptotic process"/>
    <property type="evidence" value="ECO:0000250"/>
    <property type="project" value="HGNC-UCL"/>
</dbReference>
<dbReference type="GO" id="GO:0001938">
    <property type="term" value="P:positive regulation of endothelial cell proliferation"/>
    <property type="evidence" value="ECO:0007669"/>
    <property type="project" value="Ensembl"/>
</dbReference>
<dbReference type="GO" id="GO:2001241">
    <property type="term" value="P:positive regulation of extrinsic apoptotic signaling pathway in absence of ligand"/>
    <property type="evidence" value="ECO:0007669"/>
    <property type="project" value="Ensembl"/>
</dbReference>
<dbReference type="GO" id="GO:0043547">
    <property type="term" value="P:positive regulation of GTPase activity"/>
    <property type="evidence" value="ECO:0000314"/>
    <property type="project" value="UniProtKB"/>
</dbReference>
<dbReference type="GO" id="GO:0033027">
    <property type="term" value="P:positive regulation of mast cell apoptotic process"/>
    <property type="evidence" value="ECO:0007669"/>
    <property type="project" value="Ensembl"/>
</dbReference>
<dbReference type="GO" id="GO:0043525">
    <property type="term" value="P:positive regulation of neuron apoptotic process"/>
    <property type="evidence" value="ECO:0000250"/>
    <property type="project" value="HGNC-UCL"/>
</dbReference>
<dbReference type="GO" id="GO:1904707">
    <property type="term" value="P:positive regulation of vascular associated smooth muscle cell proliferation"/>
    <property type="evidence" value="ECO:0007669"/>
    <property type="project" value="Ensembl"/>
</dbReference>
<dbReference type="GO" id="GO:0006606">
    <property type="term" value="P:protein import into nucleus"/>
    <property type="evidence" value="ECO:0007669"/>
    <property type="project" value="Ensembl"/>
</dbReference>
<dbReference type="GO" id="GO:0016601">
    <property type="term" value="P:Rac protein signal transduction"/>
    <property type="evidence" value="ECO:0007669"/>
    <property type="project" value="Ensembl"/>
</dbReference>
<dbReference type="GO" id="GO:0007265">
    <property type="term" value="P:Ras protein signal transduction"/>
    <property type="evidence" value="ECO:0000250"/>
    <property type="project" value="HGNC-UCL"/>
</dbReference>
<dbReference type="GO" id="GO:0045765">
    <property type="term" value="P:regulation of angiogenesis"/>
    <property type="evidence" value="ECO:0000315"/>
    <property type="project" value="HGNC-UCL"/>
</dbReference>
<dbReference type="GO" id="GO:0043535">
    <property type="term" value="P:regulation of blood vessel endothelial cell migration"/>
    <property type="evidence" value="ECO:0000315"/>
    <property type="project" value="HGNC-UCL"/>
</dbReference>
<dbReference type="GO" id="GO:0045124">
    <property type="term" value="P:regulation of bone resorption"/>
    <property type="evidence" value="ECO:0000250"/>
    <property type="project" value="HGNC-UCL"/>
</dbReference>
<dbReference type="GO" id="GO:0001952">
    <property type="term" value="P:regulation of cell-matrix adhesion"/>
    <property type="evidence" value="ECO:0000250"/>
    <property type="project" value="HGNC-UCL"/>
</dbReference>
<dbReference type="GO" id="GO:0070372">
    <property type="term" value="P:regulation of ERK1 and ERK2 cascade"/>
    <property type="evidence" value="ECO:0007669"/>
    <property type="project" value="Ensembl"/>
</dbReference>
<dbReference type="GO" id="GO:0010468">
    <property type="term" value="P:regulation of gene expression"/>
    <property type="evidence" value="ECO:0007669"/>
    <property type="project" value="Ensembl"/>
</dbReference>
<dbReference type="GO" id="GO:0045685">
    <property type="term" value="P:regulation of glial cell differentiation"/>
    <property type="evidence" value="ECO:0000250"/>
    <property type="project" value="HGNC-UCL"/>
</dbReference>
<dbReference type="GO" id="GO:0048169">
    <property type="term" value="P:regulation of long-term neuronal synaptic plasticity"/>
    <property type="evidence" value="ECO:0007669"/>
    <property type="project" value="Ensembl"/>
</dbReference>
<dbReference type="GO" id="GO:1900271">
    <property type="term" value="P:regulation of long-term synaptic potentiation"/>
    <property type="evidence" value="ECO:0007669"/>
    <property type="project" value="Ensembl"/>
</dbReference>
<dbReference type="GO" id="GO:0099175">
    <property type="term" value="P:regulation of postsynapse organization"/>
    <property type="evidence" value="ECO:0007669"/>
    <property type="project" value="Ensembl"/>
</dbReference>
<dbReference type="GO" id="GO:0032228">
    <property type="term" value="P:regulation of synaptic transmission, GABAergic"/>
    <property type="evidence" value="ECO:0007669"/>
    <property type="project" value="Ensembl"/>
</dbReference>
<dbReference type="GO" id="GO:0001666">
    <property type="term" value="P:response to hypoxia"/>
    <property type="evidence" value="ECO:0000250"/>
    <property type="project" value="HGNC-UCL"/>
</dbReference>
<dbReference type="GO" id="GO:0014044">
    <property type="term" value="P:Schwann cell development"/>
    <property type="evidence" value="ECO:0000250"/>
    <property type="project" value="HGNC-UCL"/>
</dbReference>
<dbReference type="GO" id="GO:0036135">
    <property type="term" value="P:Schwann cell migration"/>
    <property type="evidence" value="ECO:0007669"/>
    <property type="project" value="Ensembl"/>
</dbReference>
<dbReference type="GO" id="GO:0014010">
    <property type="term" value="P:Schwann cell proliferation"/>
    <property type="evidence" value="ECO:0007669"/>
    <property type="project" value="Ensembl"/>
</dbReference>
<dbReference type="GO" id="GO:0007519">
    <property type="term" value="P:skeletal muscle tissue development"/>
    <property type="evidence" value="ECO:0007669"/>
    <property type="project" value="Ensembl"/>
</dbReference>
<dbReference type="GO" id="GO:0048745">
    <property type="term" value="P:smooth muscle tissue development"/>
    <property type="evidence" value="ECO:0000250"/>
    <property type="project" value="HGNC-UCL"/>
</dbReference>
<dbReference type="GO" id="GO:0021510">
    <property type="term" value="P:spinal cord development"/>
    <property type="evidence" value="ECO:0000250"/>
    <property type="project" value="HGNC-UCL"/>
</dbReference>
<dbReference type="GO" id="GO:0072089">
    <property type="term" value="P:stem cell proliferation"/>
    <property type="evidence" value="ECO:0007669"/>
    <property type="project" value="Ensembl"/>
</dbReference>
<dbReference type="GO" id="GO:0048485">
    <property type="term" value="P:sympathetic nervous system development"/>
    <property type="evidence" value="ECO:0000250"/>
    <property type="project" value="HGNC-UCL"/>
</dbReference>
<dbReference type="GO" id="GO:1904738">
    <property type="term" value="P:vascular associated smooth muscle cell migration"/>
    <property type="evidence" value="ECO:0007669"/>
    <property type="project" value="Ensembl"/>
</dbReference>
<dbReference type="GO" id="GO:1990874">
    <property type="term" value="P:vascular associated smooth muscle cell proliferation"/>
    <property type="evidence" value="ECO:0007669"/>
    <property type="project" value="Ensembl"/>
</dbReference>
<dbReference type="GO" id="GO:0008542">
    <property type="term" value="P:visual learning"/>
    <property type="evidence" value="ECO:0000250"/>
    <property type="project" value="HGNC-UCL"/>
</dbReference>
<dbReference type="GO" id="GO:0042060">
    <property type="term" value="P:wound healing"/>
    <property type="evidence" value="ECO:0000250"/>
    <property type="project" value="HGNC-UCL"/>
</dbReference>
<dbReference type="CDD" id="cd13313">
    <property type="entry name" value="PH_NF1"/>
    <property type="match status" value="1"/>
</dbReference>
<dbReference type="CDD" id="cd05130">
    <property type="entry name" value="RasGAP_Neurofibromin"/>
    <property type="match status" value="1"/>
</dbReference>
<dbReference type="CDD" id="cd00170">
    <property type="entry name" value="SEC14"/>
    <property type="match status" value="1"/>
</dbReference>
<dbReference type="FunFam" id="2.30.29.30:FF:000070">
    <property type="entry name" value="Neurofibromin 1"/>
    <property type="match status" value="1"/>
</dbReference>
<dbReference type="FunFam" id="3.40.525.10:FF:000004">
    <property type="entry name" value="Neurofibromin 1"/>
    <property type="match status" value="1"/>
</dbReference>
<dbReference type="FunFam" id="1.10.506.10:FF:000015">
    <property type="entry name" value="Neurofibromin isoform 1"/>
    <property type="match status" value="1"/>
</dbReference>
<dbReference type="FunFam" id="1.10.506.10:FF:000023">
    <property type="entry name" value="Neurofibromin isoform 1"/>
    <property type="match status" value="1"/>
</dbReference>
<dbReference type="Gene3D" id="3.40.525.10">
    <property type="entry name" value="CRAL-TRIO lipid binding domain"/>
    <property type="match status" value="1"/>
</dbReference>
<dbReference type="Gene3D" id="1.10.506.10">
    <property type="entry name" value="GTPase Activation - p120gap, domain 1"/>
    <property type="match status" value="2"/>
</dbReference>
<dbReference type="Gene3D" id="2.30.29.30">
    <property type="entry name" value="Pleckstrin-homology domain (PH domain)/Phosphotyrosine-binding domain (PTB)"/>
    <property type="match status" value="1"/>
</dbReference>
<dbReference type="InterPro" id="IPR016024">
    <property type="entry name" value="ARM-type_fold"/>
</dbReference>
<dbReference type="InterPro" id="IPR001251">
    <property type="entry name" value="CRAL-TRIO_dom"/>
</dbReference>
<dbReference type="InterPro" id="IPR036865">
    <property type="entry name" value="CRAL-TRIO_dom_sf"/>
</dbReference>
<dbReference type="InterPro" id="IPR011993">
    <property type="entry name" value="PH-like_dom_sf"/>
</dbReference>
<dbReference type="InterPro" id="IPR054071">
    <property type="entry name" value="PH_NF1"/>
</dbReference>
<dbReference type="InterPro" id="IPR039360">
    <property type="entry name" value="Ras_GTPase"/>
</dbReference>
<dbReference type="InterPro" id="IPR023152">
    <property type="entry name" value="RasGAP_CS"/>
</dbReference>
<dbReference type="InterPro" id="IPR001936">
    <property type="entry name" value="RasGAP_dom"/>
</dbReference>
<dbReference type="InterPro" id="IPR008936">
    <property type="entry name" value="Rho_GTPase_activation_prot"/>
</dbReference>
<dbReference type="PANTHER" id="PTHR10194:SF142">
    <property type="entry name" value="NEUROFIBROMIN"/>
    <property type="match status" value="1"/>
</dbReference>
<dbReference type="PANTHER" id="PTHR10194">
    <property type="entry name" value="RAS GTPASE-ACTIVATING PROTEINS"/>
    <property type="match status" value="1"/>
</dbReference>
<dbReference type="Pfam" id="PF13716">
    <property type="entry name" value="CRAL_TRIO_2"/>
    <property type="match status" value="1"/>
</dbReference>
<dbReference type="Pfam" id="PF21877">
    <property type="entry name" value="PH_NF1"/>
    <property type="match status" value="1"/>
</dbReference>
<dbReference type="Pfam" id="PF00616">
    <property type="entry name" value="RasGAP"/>
    <property type="match status" value="1"/>
</dbReference>
<dbReference type="SMART" id="SM00323">
    <property type="entry name" value="RasGAP"/>
    <property type="match status" value="1"/>
</dbReference>
<dbReference type="SMART" id="SM00516">
    <property type="entry name" value="SEC14"/>
    <property type="match status" value="1"/>
</dbReference>
<dbReference type="SUPFAM" id="SSF48371">
    <property type="entry name" value="ARM repeat"/>
    <property type="match status" value="1"/>
</dbReference>
<dbReference type="SUPFAM" id="SSF48350">
    <property type="entry name" value="GTPase activation domain, GAP"/>
    <property type="match status" value="1"/>
</dbReference>
<dbReference type="PROSITE" id="PS50191">
    <property type="entry name" value="CRAL_TRIO"/>
    <property type="match status" value="1"/>
</dbReference>
<dbReference type="PROSITE" id="PS00509">
    <property type="entry name" value="RAS_GTPASE_ACTIV_1"/>
    <property type="match status" value="1"/>
</dbReference>
<dbReference type="PROSITE" id="PS50018">
    <property type="entry name" value="RAS_GTPASE_ACTIV_2"/>
    <property type="match status" value="1"/>
</dbReference>
<proteinExistence type="evidence at protein level"/>
<keyword id="KW-0002">3D-structure</keyword>
<keyword id="KW-0007">Acetylation</keyword>
<keyword id="KW-0025">Alternative splicing</keyword>
<keyword id="KW-1003">Cell membrane</keyword>
<keyword id="KW-0225">Disease variant</keyword>
<keyword id="KW-0343">GTPase activation</keyword>
<keyword id="KW-0446">Lipid-binding</keyword>
<keyword id="KW-0472">Membrane</keyword>
<keyword id="KW-0539">Nucleus</keyword>
<keyword id="KW-0597">Phosphoprotein</keyword>
<keyword id="KW-1267">Proteomics identification</keyword>
<keyword id="KW-1185">Reference proteome</keyword>
<keyword id="KW-0691">RNA editing</keyword>
<keyword id="KW-0043">Tumor suppressor</keyword>
<keyword id="KW-0832">Ubl conjugation</keyword>